<dbReference type="EMBL" id="AB058716">
    <property type="protein sequence ID" value="BAB47442.1"/>
    <property type="status" value="ALT_INIT"/>
    <property type="molecule type" value="mRNA"/>
</dbReference>
<dbReference type="EMBL" id="AL133215">
    <property type="status" value="NOT_ANNOTATED_CDS"/>
    <property type="molecule type" value="Genomic_DNA"/>
</dbReference>
<dbReference type="EMBL" id="CH471066">
    <property type="protein sequence ID" value="EAW49790.1"/>
    <property type="molecule type" value="Genomic_DNA"/>
</dbReference>
<dbReference type="EMBL" id="CH471066">
    <property type="protein sequence ID" value="EAW49791.1"/>
    <property type="molecule type" value="Genomic_DNA"/>
</dbReference>
<dbReference type="EMBL" id="CH471066">
    <property type="protein sequence ID" value="EAW49792.1"/>
    <property type="molecule type" value="Genomic_DNA"/>
</dbReference>
<dbReference type="EMBL" id="BC006212">
    <property type="protein sequence ID" value="AAH06212.2"/>
    <property type="molecule type" value="mRNA"/>
</dbReference>
<dbReference type="EMBL" id="BC058938">
    <property type="protein sequence ID" value="AAH58938.1"/>
    <property type="molecule type" value="mRNA"/>
</dbReference>
<dbReference type="EMBL" id="AY029201">
    <property type="protein sequence ID" value="AAK31577.1"/>
    <property type="molecule type" value="mRNA"/>
</dbReference>
<dbReference type="EMBL" id="AL834338">
    <property type="protein sequence ID" value="CAD39005.1"/>
    <property type="molecule type" value="mRNA"/>
</dbReference>
<dbReference type="CCDS" id="CCDS7507.1"/>
<dbReference type="RefSeq" id="NP_001305028.1">
    <property type="nucleotide sequence ID" value="NM_001318099.2"/>
</dbReference>
<dbReference type="RefSeq" id="NP_001305029.1">
    <property type="nucleotide sequence ID" value="NM_001318100.2"/>
</dbReference>
<dbReference type="RefSeq" id="NP_001305030.1">
    <property type="nucleotide sequence ID" value="NM_001318101.1"/>
</dbReference>
<dbReference type="RefSeq" id="NP_001381879.1">
    <property type="nucleotide sequence ID" value="NM_001394950.1"/>
</dbReference>
<dbReference type="RefSeq" id="NP_001381880.1">
    <property type="nucleotide sequence ID" value="NM_001394951.1"/>
</dbReference>
<dbReference type="RefSeq" id="NP_001381881.1">
    <property type="nucleotide sequence ID" value="NM_001394952.1"/>
</dbReference>
<dbReference type="RefSeq" id="NP_115805.1">
    <property type="nucleotide sequence ID" value="NM_032429.4"/>
</dbReference>
<dbReference type="RefSeq" id="XP_005270279.1">
    <property type="nucleotide sequence ID" value="XM_005270222.4"/>
</dbReference>
<dbReference type="RefSeq" id="XP_016872269.1">
    <property type="nucleotide sequence ID" value="XM_017016780.1"/>
</dbReference>
<dbReference type="SMR" id="Q9BRK4"/>
<dbReference type="BioGRID" id="124083">
    <property type="interactions" value="530"/>
</dbReference>
<dbReference type="FunCoup" id="Q9BRK4">
    <property type="interactions" value="1132"/>
</dbReference>
<dbReference type="IntAct" id="Q9BRK4">
    <property type="interactions" value="351"/>
</dbReference>
<dbReference type="MINT" id="Q9BRK4"/>
<dbReference type="STRING" id="9606.ENSP00000359240"/>
<dbReference type="GlyGen" id="Q9BRK4">
    <property type="glycosylation" value="2 sites, 2 O-linked glycans (2 sites)"/>
</dbReference>
<dbReference type="iPTMnet" id="Q9BRK4"/>
<dbReference type="PhosphoSitePlus" id="Q9BRK4"/>
<dbReference type="BioMuta" id="LZTS2"/>
<dbReference type="DMDM" id="46396501"/>
<dbReference type="jPOST" id="Q9BRK4"/>
<dbReference type="MassIVE" id="Q9BRK4"/>
<dbReference type="PaxDb" id="9606-ENSP00000359240"/>
<dbReference type="PeptideAtlas" id="Q9BRK4"/>
<dbReference type="ProteomicsDB" id="78778"/>
<dbReference type="Pumba" id="Q9BRK4"/>
<dbReference type="Antibodypedia" id="31240">
    <property type="antibodies" value="151 antibodies from 27 providers"/>
</dbReference>
<dbReference type="DNASU" id="84445"/>
<dbReference type="Ensembl" id="ENST00000370220.1">
    <property type="protein sequence ID" value="ENSP00000359240.1"/>
    <property type="gene ID" value="ENSG00000107816.17"/>
</dbReference>
<dbReference type="Ensembl" id="ENST00000370223.7">
    <property type="protein sequence ID" value="ENSP00000359243.3"/>
    <property type="gene ID" value="ENSG00000107816.17"/>
</dbReference>
<dbReference type="Ensembl" id="ENST00000454422.2">
    <property type="protein sequence ID" value="ENSP00000416972.2"/>
    <property type="gene ID" value="ENSG00000107816.17"/>
</dbReference>
<dbReference type="GeneID" id="84445"/>
<dbReference type="KEGG" id="hsa:84445"/>
<dbReference type="MANE-Select" id="ENST00000454422.2">
    <property type="protein sequence ID" value="ENSP00000416972.2"/>
    <property type="RefSeq nucleotide sequence ID" value="NM_001318100.2"/>
    <property type="RefSeq protein sequence ID" value="NP_001305029.1"/>
</dbReference>
<dbReference type="UCSC" id="uc001ksj.4">
    <property type="organism name" value="human"/>
</dbReference>
<dbReference type="AGR" id="HGNC:29381"/>
<dbReference type="CTD" id="84445"/>
<dbReference type="DisGeNET" id="84445"/>
<dbReference type="GeneCards" id="LZTS2"/>
<dbReference type="HGNC" id="HGNC:29381">
    <property type="gene designation" value="LZTS2"/>
</dbReference>
<dbReference type="HPA" id="ENSG00000107816">
    <property type="expression patterns" value="Low tissue specificity"/>
</dbReference>
<dbReference type="MIM" id="610454">
    <property type="type" value="gene"/>
</dbReference>
<dbReference type="neXtProt" id="NX_Q9BRK4"/>
<dbReference type="OpenTargets" id="ENSG00000107816"/>
<dbReference type="PharmGKB" id="PA134944540"/>
<dbReference type="VEuPathDB" id="HostDB:ENSG00000107816"/>
<dbReference type="eggNOG" id="ENOG502QWFS">
    <property type="taxonomic scope" value="Eukaryota"/>
</dbReference>
<dbReference type="GeneTree" id="ENSGT00940000154078"/>
<dbReference type="HOGENOM" id="CLU_026379_2_0_1"/>
<dbReference type="InParanoid" id="Q9BRK4"/>
<dbReference type="OMA" id="LQHNYVQ"/>
<dbReference type="OrthoDB" id="10030037at2759"/>
<dbReference type="PAN-GO" id="Q9BRK4">
    <property type="GO annotations" value="1 GO annotation based on evolutionary models"/>
</dbReference>
<dbReference type="PhylomeDB" id="Q9BRK4"/>
<dbReference type="TreeFam" id="TF331420"/>
<dbReference type="PathwayCommons" id="Q9BRK4"/>
<dbReference type="SignaLink" id="Q9BRK4"/>
<dbReference type="BioGRID-ORCS" id="84445">
    <property type="hits" value="13 hits in 1161 CRISPR screens"/>
</dbReference>
<dbReference type="CD-CODE" id="8C2F96ED">
    <property type="entry name" value="Centrosome"/>
</dbReference>
<dbReference type="ChiTaRS" id="LZTS2">
    <property type="organism name" value="human"/>
</dbReference>
<dbReference type="GenomeRNAi" id="84445"/>
<dbReference type="Pharos" id="Q9BRK4">
    <property type="development level" value="Tbio"/>
</dbReference>
<dbReference type="PRO" id="PR:Q9BRK4"/>
<dbReference type="Proteomes" id="UP000005640">
    <property type="component" value="Chromosome 10"/>
</dbReference>
<dbReference type="RNAct" id="Q9BRK4">
    <property type="molecule type" value="protein"/>
</dbReference>
<dbReference type="Bgee" id="ENSG00000107816">
    <property type="expression patterns" value="Expressed in mucosa of stomach and 169 other cell types or tissues"/>
</dbReference>
<dbReference type="ExpressionAtlas" id="Q9BRK4">
    <property type="expression patterns" value="baseline and differential"/>
</dbReference>
<dbReference type="GO" id="GO:0005813">
    <property type="term" value="C:centrosome"/>
    <property type="evidence" value="ECO:0007669"/>
    <property type="project" value="UniProtKB-SubCell"/>
</dbReference>
<dbReference type="GO" id="GO:0005829">
    <property type="term" value="C:cytosol"/>
    <property type="evidence" value="ECO:0000314"/>
    <property type="project" value="HPA"/>
</dbReference>
<dbReference type="GO" id="GO:0005874">
    <property type="term" value="C:microtubule"/>
    <property type="evidence" value="ECO:0007669"/>
    <property type="project" value="UniProtKB-KW"/>
</dbReference>
<dbReference type="GO" id="GO:0030496">
    <property type="term" value="C:midbody"/>
    <property type="evidence" value="ECO:0007669"/>
    <property type="project" value="UniProtKB-UniRule"/>
</dbReference>
<dbReference type="GO" id="GO:0005886">
    <property type="term" value="C:plasma membrane"/>
    <property type="evidence" value="ECO:0000314"/>
    <property type="project" value="HPA"/>
</dbReference>
<dbReference type="GO" id="GO:0031982">
    <property type="term" value="C:vesicle"/>
    <property type="evidence" value="ECO:0000314"/>
    <property type="project" value="BHF-UCL"/>
</dbReference>
<dbReference type="GO" id="GO:0048144">
    <property type="term" value="P:fibroblast proliferation"/>
    <property type="evidence" value="ECO:0007669"/>
    <property type="project" value="Ensembl"/>
</dbReference>
<dbReference type="GO" id="GO:0051013">
    <property type="term" value="P:microtubule severing"/>
    <property type="evidence" value="ECO:0007669"/>
    <property type="project" value="UniProtKB-UniRule"/>
</dbReference>
<dbReference type="GO" id="GO:0000281">
    <property type="term" value="P:mitotic cytokinesis"/>
    <property type="evidence" value="ECO:0007669"/>
    <property type="project" value="UniProtKB-UniRule"/>
</dbReference>
<dbReference type="GO" id="GO:0090090">
    <property type="term" value="P:negative regulation of canonical Wnt signaling pathway"/>
    <property type="evidence" value="ECO:0000318"/>
    <property type="project" value="GO_Central"/>
</dbReference>
<dbReference type="GO" id="GO:0048147">
    <property type="term" value="P:negative regulation of fibroblast proliferation"/>
    <property type="evidence" value="ECO:0007669"/>
    <property type="project" value="Ensembl"/>
</dbReference>
<dbReference type="GO" id="GO:1900181">
    <property type="term" value="P:negative regulation of protein localization to nucleus"/>
    <property type="evidence" value="ECO:0007669"/>
    <property type="project" value="Ensembl"/>
</dbReference>
<dbReference type="GO" id="GO:0051168">
    <property type="term" value="P:nuclear export"/>
    <property type="evidence" value="ECO:0007669"/>
    <property type="project" value="UniProtKB-UniRule"/>
</dbReference>
<dbReference type="GO" id="GO:0060682">
    <property type="term" value="P:primary ureteric bud growth"/>
    <property type="evidence" value="ECO:0007669"/>
    <property type="project" value="Ensembl"/>
</dbReference>
<dbReference type="GO" id="GO:0051255">
    <property type="term" value="P:spindle midzone assembly"/>
    <property type="evidence" value="ECO:0007669"/>
    <property type="project" value="UniProtKB-UniRule"/>
</dbReference>
<dbReference type="GO" id="GO:0072197">
    <property type="term" value="P:ureter morphogenesis"/>
    <property type="evidence" value="ECO:0007669"/>
    <property type="project" value="Ensembl"/>
</dbReference>
<dbReference type="GO" id="GO:0016055">
    <property type="term" value="P:Wnt signaling pathway"/>
    <property type="evidence" value="ECO:0007669"/>
    <property type="project" value="UniProtKB-KW"/>
</dbReference>
<dbReference type="HAMAP" id="MF_03026">
    <property type="entry name" value="LZTS2"/>
    <property type="match status" value="1"/>
</dbReference>
<dbReference type="InterPro" id="IPR045329">
    <property type="entry name" value="LZTS"/>
</dbReference>
<dbReference type="InterPro" id="IPR028597">
    <property type="entry name" value="LZTS2"/>
</dbReference>
<dbReference type="PANTHER" id="PTHR19354">
    <property type="entry name" value="ZIPPER PUTATIVE TUMOR SUPPRESSOR 2 HOMOLOG-LIKE PROTEIN-RELATED"/>
    <property type="match status" value="1"/>
</dbReference>
<dbReference type="PANTHER" id="PTHR19354:SF4">
    <property type="entry name" value="ZIPPER PUTATIVE TUMOR SUPPRESSOR 2-RELATED"/>
    <property type="match status" value="1"/>
</dbReference>
<dbReference type="Pfam" id="PF06818">
    <property type="entry name" value="Fez1"/>
    <property type="match status" value="1"/>
</dbReference>
<evidence type="ECO:0000250" key="1"/>
<evidence type="ECO:0000250" key="2">
    <source>
        <dbReference type="UniProtKB" id="Q91YU6"/>
    </source>
</evidence>
<evidence type="ECO:0000255" key="3">
    <source>
        <dbReference type="HAMAP-Rule" id="MF_03026"/>
    </source>
</evidence>
<evidence type="ECO:0000256" key="4">
    <source>
        <dbReference type="SAM" id="MobiDB-lite"/>
    </source>
</evidence>
<evidence type="ECO:0000269" key="5">
    <source>
    </source>
</evidence>
<evidence type="ECO:0000269" key="6">
    <source>
    </source>
</evidence>
<evidence type="ECO:0000269" key="7">
    <source>
    </source>
</evidence>
<evidence type="ECO:0000269" key="8">
    <source>
    </source>
</evidence>
<evidence type="ECO:0000269" key="9">
    <source>
    </source>
</evidence>
<evidence type="ECO:0000269" key="10">
    <source>
    </source>
</evidence>
<evidence type="ECO:0000305" key="11"/>
<evidence type="ECO:0007744" key="12">
    <source>
    </source>
</evidence>
<evidence type="ECO:0007744" key="13">
    <source>
    </source>
</evidence>
<reference key="1">
    <citation type="journal article" date="2001" name="DNA Res.">
        <title>Prediction of the coding sequences of unidentified human genes. XX. The complete sequences of 100 new cDNA clones from brain which code for large proteins in vitro.</title>
        <authorList>
            <person name="Nagase T."/>
            <person name="Nakayama M."/>
            <person name="Nakajima D."/>
            <person name="Kikuno R."/>
            <person name="Ohara O."/>
        </authorList>
    </citation>
    <scope>NUCLEOTIDE SEQUENCE [LARGE SCALE MRNA]</scope>
    <source>
        <tissue>Brain</tissue>
    </source>
</reference>
<reference key="2">
    <citation type="journal article" date="2004" name="Nature">
        <title>The DNA sequence and comparative analysis of human chromosome 10.</title>
        <authorList>
            <person name="Deloukas P."/>
            <person name="Earthrowl M.E."/>
            <person name="Grafham D.V."/>
            <person name="Rubenfield M."/>
            <person name="French L."/>
            <person name="Steward C.A."/>
            <person name="Sims S.K."/>
            <person name="Jones M.C."/>
            <person name="Searle S."/>
            <person name="Scott C."/>
            <person name="Howe K."/>
            <person name="Hunt S.E."/>
            <person name="Andrews T.D."/>
            <person name="Gilbert J.G.R."/>
            <person name="Swarbreck D."/>
            <person name="Ashurst J.L."/>
            <person name="Taylor A."/>
            <person name="Battles J."/>
            <person name="Bird C.P."/>
            <person name="Ainscough R."/>
            <person name="Almeida J.P."/>
            <person name="Ashwell R.I.S."/>
            <person name="Ambrose K.D."/>
            <person name="Babbage A.K."/>
            <person name="Bagguley C.L."/>
            <person name="Bailey J."/>
            <person name="Banerjee R."/>
            <person name="Bates K."/>
            <person name="Beasley H."/>
            <person name="Bray-Allen S."/>
            <person name="Brown A.J."/>
            <person name="Brown J.Y."/>
            <person name="Burford D.C."/>
            <person name="Burrill W."/>
            <person name="Burton J."/>
            <person name="Cahill P."/>
            <person name="Camire D."/>
            <person name="Carter N.P."/>
            <person name="Chapman J.C."/>
            <person name="Clark S.Y."/>
            <person name="Clarke G."/>
            <person name="Clee C.M."/>
            <person name="Clegg S."/>
            <person name="Corby N."/>
            <person name="Coulson A."/>
            <person name="Dhami P."/>
            <person name="Dutta I."/>
            <person name="Dunn M."/>
            <person name="Faulkner L."/>
            <person name="Frankish A."/>
            <person name="Frankland J.A."/>
            <person name="Garner P."/>
            <person name="Garnett J."/>
            <person name="Gribble S."/>
            <person name="Griffiths C."/>
            <person name="Grocock R."/>
            <person name="Gustafson E."/>
            <person name="Hammond S."/>
            <person name="Harley J.L."/>
            <person name="Hart E."/>
            <person name="Heath P.D."/>
            <person name="Ho T.P."/>
            <person name="Hopkins B."/>
            <person name="Horne J."/>
            <person name="Howden P.J."/>
            <person name="Huckle E."/>
            <person name="Hynds C."/>
            <person name="Johnson C."/>
            <person name="Johnson D."/>
            <person name="Kana A."/>
            <person name="Kay M."/>
            <person name="Kimberley A.M."/>
            <person name="Kershaw J.K."/>
            <person name="Kokkinaki M."/>
            <person name="Laird G.K."/>
            <person name="Lawlor S."/>
            <person name="Lee H.M."/>
            <person name="Leongamornlert D.A."/>
            <person name="Laird G."/>
            <person name="Lloyd C."/>
            <person name="Lloyd D.M."/>
            <person name="Loveland J."/>
            <person name="Lovell J."/>
            <person name="McLaren S."/>
            <person name="McLay K.E."/>
            <person name="McMurray A."/>
            <person name="Mashreghi-Mohammadi M."/>
            <person name="Matthews L."/>
            <person name="Milne S."/>
            <person name="Nickerson T."/>
            <person name="Nguyen M."/>
            <person name="Overton-Larty E."/>
            <person name="Palmer S.A."/>
            <person name="Pearce A.V."/>
            <person name="Peck A.I."/>
            <person name="Pelan S."/>
            <person name="Phillimore B."/>
            <person name="Porter K."/>
            <person name="Rice C.M."/>
            <person name="Rogosin A."/>
            <person name="Ross M.T."/>
            <person name="Sarafidou T."/>
            <person name="Sehra H.K."/>
            <person name="Shownkeen R."/>
            <person name="Skuce C.D."/>
            <person name="Smith M."/>
            <person name="Standring L."/>
            <person name="Sycamore N."/>
            <person name="Tester J."/>
            <person name="Thorpe A."/>
            <person name="Torcasso W."/>
            <person name="Tracey A."/>
            <person name="Tromans A."/>
            <person name="Tsolas J."/>
            <person name="Wall M."/>
            <person name="Walsh J."/>
            <person name="Wang H."/>
            <person name="Weinstock K."/>
            <person name="West A.P."/>
            <person name="Willey D.L."/>
            <person name="Whitehead S.L."/>
            <person name="Wilming L."/>
            <person name="Wray P.W."/>
            <person name="Young L."/>
            <person name="Chen Y."/>
            <person name="Lovering R.C."/>
            <person name="Moschonas N.K."/>
            <person name="Siebert R."/>
            <person name="Fechtel K."/>
            <person name="Bentley D."/>
            <person name="Durbin R.M."/>
            <person name="Hubbard T."/>
            <person name="Doucette-Stamm L."/>
            <person name="Beck S."/>
            <person name="Smith D.R."/>
            <person name="Rogers J."/>
        </authorList>
    </citation>
    <scope>NUCLEOTIDE SEQUENCE [LARGE SCALE GENOMIC DNA]</scope>
</reference>
<reference key="3">
    <citation type="submission" date="2005-09" db="EMBL/GenBank/DDBJ databases">
        <authorList>
            <person name="Mural R.J."/>
            <person name="Istrail S."/>
            <person name="Sutton G.G."/>
            <person name="Florea L."/>
            <person name="Halpern A.L."/>
            <person name="Mobarry C.M."/>
            <person name="Lippert R."/>
            <person name="Walenz B."/>
            <person name="Shatkay H."/>
            <person name="Dew I."/>
            <person name="Miller J.R."/>
            <person name="Flanigan M.J."/>
            <person name="Edwards N.J."/>
            <person name="Bolanos R."/>
            <person name="Fasulo D."/>
            <person name="Halldorsson B.V."/>
            <person name="Hannenhalli S."/>
            <person name="Turner R."/>
            <person name="Yooseph S."/>
            <person name="Lu F."/>
            <person name="Nusskern D.R."/>
            <person name="Shue B.C."/>
            <person name="Zheng X.H."/>
            <person name="Zhong F."/>
            <person name="Delcher A.L."/>
            <person name="Huson D.H."/>
            <person name="Kravitz S.A."/>
            <person name="Mouchard L."/>
            <person name="Reinert K."/>
            <person name="Remington K.A."/>
            <person name="Clark A.G."/>
            <person name="Waterman M.S."/>
            <person name="Eichler E.E."/>
            <person name="Adams M.D."/>
            <person name="Hunkapiller M.W."/>
            <person name="Myers E.W."/>
            <person name="Venter J.C."/>
        </authorList>
    </citation>
    <scope>NUCLEOTIDE SEQUENCE [LARGE SCALE GENOMIC DNA]</scope>
</reference>
<reference key="4">
    <citation type="journal article" date="2004" name="Genome Res.">
        <title>The status, quality, and expansion of the NIH full-length cDNA project: the Mammalian Gene Collection (MGC).</title>
        <authorList>
            <consortium name="The MGC Project Team"/>
        </authorList>
    </citation>
    <scope>NUCLEOTIDE SEQUENCE [LARGE SCALE MRNA]</scope>
    <source>
        <tissue>Brain</tissue>
        <tissue>Uterus</tissue>
    </source>
</reference>
<reference key="5">
    <citation type="journal article" date="2001" name="Oncogene">
        <title>LAPSER1: a novel candidate tumor suppressor gene from 10q24.3.</title>
        <authorList>
            <person name="Cabeza-Arvelaiz Y."/>
            <person name="Thompson T.C."/>
            <person name="Sepulveda J.L."/>
            <person name="Chinault A.C."/>
        </authorList>
    </citation>
    <scope>NUCLEOTIDE SEQUENCE [MRNA] OF 26-669</scope>
    <scope>ALTERNATIVE SPLICING</scope>
    <scope>TISSUE SPECIFICITY</scope>
    <source>
        <tissue>Prostate</tissue>
    </source>
</reference>
<reference key="6">
    <citation type="journal article" date="2007" name="BMC Genomics">
        <title>The full-ORF clone resource of the German cDNA consortium.</title>
        <authorList>
            <person name="Bechtel S."/>
            <person name="Rosenfelder H."/>
            <person name="Duda A."/>
            <person name="Schmidt C.P."/>
            <person name="Ernst U."/>
            <person name="Wellenreuther R."/>
            <person name="Mehrle A."/>
            <person name="Schuster C."/>
            <person name="Bahr A."/>
            <person name="Bloecker H."/>
            <person name="Heubner D."/>
            <person name="Hoerlein A."/>
            <person name="Michel G."/>
            <person name="Wedler H."/>
            <person name="Koehrer K."/>
            <person name="Ottenwaelder B."/>
            <person name="Poustka A."/>
            <person name="Wiemann S."/>
            <person name="Schupp I."/>
        </authorList>
    </citation>
    <scope>NUCLEOTIDE SEQUENCE [LARGE SCALE MRNA] OF 139-669</scope>
    <source>
        <tissue>Amygdala</tissue>
    </source>
</reference>
<reference key="7">
    <citation type="journal article" date="2006" name="Mol. Cell. Biol.">
        <title>LZTS2 is a novel beta-catenin-interacting protein and regulates the nuclear export of beta-catenin.</title>
        <authorList>
            <person name="Thyssen G."/>
            <person name="Li T.-H."/>
            <person name="Lehmann L."/>
            <person name="Zhuo M."/>
            <person name="Sharma M."/>
            <person name="Sun Z."/>
        </authorList>
    </citation>
    <scope>FUNCTION</scope>
    <scope>INTERACTION WITH CTNNB1</scope>
    <scope>SUBCELLULAR LOCATION</scope>
    <scope>NUCLEAR EXPORT SIGNAL</scope>
    <scope>MUTAGENESIS OF LEU-638 AND LEU-640</scope>
</reference>
<reference key="8">
    <citation type="journal article" date="2007" name="FASEB J.">
        <title>LAPSER1 is a putative cytokinetic tumor suppressor that shows the same centrosome and midbody subcellular localization pattern as p80 katanin.</title>
        <authorList>
            <person name="Sudo H."/>
            <person name="Maru Y."/>
        </authorList>
    </citation>
    <scope>FUNCTION</scope>
    <scope>INTERACTION WITH GAMMA-TUBULIN; KIF23 AND KATNB1</scope>
    <scope>SUBCELLULAR LOCATION</scope>
</reference>
<reference key="9">
    <citation type="journal article" date="2008" name="Biochim. Biophys. Acta">
        <title>Crossregulation of beta-catenin/Tcf pathway by NF-kappaB is mediated by lzts2 in human adipose tissue-derived mesenchymal stem cells.</title>
        <authorList>
            <person name="Cho H.H."/>
            <person name="Joo H.J."/>
            <person name="Song J.S."/>
            <person name="Bae Y.C."/>
            <person name="Jung J.S."/>
        </authorList>
    </citation>
    <scope>FUNCTION</scope>
    <scope>INDUCTION</scope>
</reference>
<reference key="10">
    <citation type="journal article" date="2008" name="Hum. Mol. Genet.">
        <title>LAPSER1/LZTS2: a pluripotent tumor suppressor linked to the inhibition of katanin-mediated microtubule severing.</title>
        <authorList>
            <person name="Sudo H."/>
            <person name="Maru Y."/>
        </authorList>
    </citation>
    <scope>FUNCTION</scope>
    <scope>SUBCELLULAR LOCATION</scope>
</reference>
<reference key="11">
    <citation type="journal article" date="2011" name="Sci. Signal.">
        <title>System-wide temporal characterization of the proteome and phosphoproteome of human embryonic stem cell differentiation.</title>
        <authorList>
            <person name="Rigbolt K.T."/>
            <person name="Prokhorova T.A."/>
            <person name="Akimov V."/>
            <person name="Henningsen J."/>
            <person name="Johansen P.T."/>
            <person name="Kratchmarova I."/>
            <person name="Kassem M."/>
            <person name="Mann M."/>
            <person name="Olsen J.V."/>
            <person name="Blagoev B."/>
        </authorList>
    </citation>
    <scope>PHOSPHORYLATION [LARGE SCALE ANALYSIS] AT SER-570</scope>
    <scope>IDENTIFICATION BY MASS SPECTROMETRY [LARGE SCALE ANALYSIS]</scope>
</reference>
<reference key="12">
    <citation type="journal article" date="2013" name="J. Proteome Res.">
        <title>Toward a comprehensive characterization of a human cancer cell phosphoproteome.</title>
        <authorList>
            <person name="Zhou H."/>
            <person name="Di Palma S."/>
            <person name="Preisinger C."/>
            <person name="Peng M."/>
            <person name="Polat A.N."/>
            <person name="Heck A.J."/>
            <person name="Mohammed S."/>
        </authorList>
    </citation>
    <scope>PHOSPHORYLATION [LARGE SCALE ANALYSIS] AT SER-570</scope>
    <scope>IDENTIFICATION BY MASS SPECTROMETRY [LARGE SCALE ANALYSIS]</scope>
    <source>
        <tissue>Erythroleukemia</tissue>
    </source>
</reference>
<reference key="13">
    <citation type="journal article" date="2006" name="Science">
        <title>The consensus coding sequences of human breast and colorectal cancers.</title>
        <authorList>
            <person name="Sjoeblom T."/>
            <person name="Jones S."/>
            <person name="Wood L.D."/>
            <person name="Parsons D.W."/>
            <person name="Lin J."/>
            <person name="Barber T.D."/>
            <person name="Mandelker D."/>
            <person name="Leary R.J."/>
            <person name="Ptak J."/>
            <person name="Silliman N."/>
            <person name="Szabo S."/>
            <person name="Buckhaults P."/>
            <person name="Farrell C."/>
            <person name="Meeh P."/>
            <person name="Markowitz S.D."/>
            <person name="Willis J."/>
            <person name="Dawson D."/>
            <person name="Willson J.K.V."/>
            <person name="Gazdar A.F."/>
            <person name="Hartigan J."/>
            <person name="Wu L."/>
            <person name="Liu C."/>
            <person name="Parmigiani G."/>
            <person name="Park B.H."/>
            <person name="Bachman K.E."/>
            <person name="Papadopoulos N."/>
            <person name="Vogelstein B."/>
            <person name="Kinzler K.W."/>
            <person name="Velculescu V.E."/>
        </authorList>
    </citation>
    <scope>VARIANTS [LARGE SCALE ANALYSIS] HIS-121 AND ARG-291</scope>
</reference>
<feature type="chain" id="PRO_0000182974" description="Leucine zipper putative tumor suppressor 2">
    <location>
        <begin position="1"/>
        <end position="669"/>
    </location>
</feature>
<feature type="region of interest" description="Required for centrosomal localization" evidence="1">
    <location>
        <begin position="1"/>
        <end position="332"/>
    </location>
</feature>
<feature type="region of interest" description="Disordered" evidence="4">
    <location>
        <begin position="1"/>
        <end position="56"/>
    </location>
</feature>
<feature type="region of interest" description="Disordered" evidence="4">
    <location>
        <begin position="92"/>
        <end position="131"/>
    </location>
</feature>
<feature type="region of interest" description="Disordered" evidence="4">
    <location>
        <begin position="150"/>
        <end position="201"/>
    </location>
</feature>
<feature type="region of interest" description="Disordered" evidence="4">
    <location>
        <begin position="215"/>
        <end position="323"/>
    </location>
</feature>
<feature type="region of interest" description="Sufficient for interaction with CTNNB1" evidence="7">
    <location>
        <begin position="447"/>
        <end position="669"/>
    </location>
</feature>
<feature type="region of interest" description="Sufficient for interaction with KATNB1 and for inhibition of katanin-mediated microtubule severing" evidence="1">
    <location>
        <begin position="450"/>
        <end position="669"/>
    </location>
</feature>
<feature type="coiled-coil region" evidence="3">
    <location>
        <begin position="328"/>
        <end position="649"/>
    </location>
</feature>
<feature type="short sequence motif" description="Nuclear export signal">
    <location>
        <begin position="631"/>
        <end position="640"/>
    </location>
</feature>
<feature type="compositionally biased region" description="Low complexity" evidence="4">
    <location>
        <begin position="1"/>
        <end position="25"/>
    </location>
</feature>
<feature type="compositionally biased region" description="Polar residues" evidence="4">
    <location>
        <begin position="172"/>
        <end position="181"/>
    </location>
</feature>
<feature type="compositionally biased region" description="Low complexity" evidence="4">
    <location>
        <begin position="187"/>
        <end position="199"/>
    </location>
</feature>
<feature type="compositionally biased region" description="Polar residues" evidence="4">
    <location>
        <begin position="215"/>
        <end position="233"/>
    </location>
</feature>
<feature type="compositionally biased region" description="Low complexity" evidence="4">
    <location>
        <begin position="241"/>
        <end position="251"/>
    </location>
</feature>
<feature type="compositionally biased region" description="Low complexity" evidence="4">
    <location>
        <begin position="267"/>
        <end position="283"/>
    </location>
</feature>
<feature type="compositionally biased region" description="Gly residues" evidence="4">
    <location>
        <begin position="284"/>
        <end position="295"/>
    </location>
</feature>
<feature type="compositionally biased region" description="Polar residues" evidence="4">
    <location>
        <begin position="298"/>
        <end position="308"/>
    </location>
</feature>
<feature type="compositionally biased region" description="Pro residues" evidence="4">
    <location>
        <begin position="311"/>
        <end position="320"/>
    </location>
</feature>
<feature type="modified residue" description="Phosphoserine" evidence="2">
    <location>
        <position position="249"/>
    </location>
</feature>
<feature type="modified residue" description="Phosphoserine" evidence="2">
    <location>
        <position position="296"/>
    </location>
</feature>
<feature type="modified residue" description="Phosphoserine" evidence="12 13">
    <location>
        <position position="570"/>
    </location>
</feature>
<feature type="sequence variant" id="VAR_036364" description="In a colorectal cancer sample; somatic mutation; dbSNP:rs367898512." evidence="6">
    <original>R</original>
    <variation>H</variation>
    <location>
        <position position="121"/>
    </location>
</feature>
<feature type="sequence variant" id="VAR_036365" description="In a breast cancer sample; somatic mutation; dbSNP:rs1235690743." evidence="6">
    <original>G</original>
    <variation>R</variation>
    <location>
        <position position="291"/>
    </location>
</feature>
<feature type="sequence variant" id="VAR_018277" description="In dbSNP:rs2275381.">
    <original>R</original>
    <variation>W</variation>
    <location>
        <position position="299"/>
    </location>
</feature>
<feature type="mutagenesis site" description="Induces nuclear accumulation. Impairs nuclear exclusion of beta-catenin; when associated with A-640." evidence="7">
    <original>L</original>
    <variation>A</variation>
    <location>
        <position position="638"/>
    </location>
</feature>
<feature type="mutagenesis site" description="Induces nuclear accumulation. Impairs nuclear exclusion of beta-catenin; when associated with A-38." evidence="7">
    <original>L</original>
    <variation>A</variation>
    <location>
        <position position="640"/>
    </location>
</feature>
<feature type="sequence conflict" description="In Ref. 4; AAH58938." evidence="11" ref="4">
    <original>V</original>
    <variation>L</variation>
    <location>
        <position position="289"/>
    </location>
</feature>
<organism>
    <name type="scientific">Homo sapiens</name>
    <name type="common">Human</name>
    <dbReference type="NCBI Taxonomy" id="9606"/>
    <lineage>
        <taxon>Eukaryota</taxon>
        <taxon>Metazoa</taxon>
        <taxon>Chordata</taxon>
        <taxon>Craniata</taxon>
        <taxon>Vertebrata</taxon>
        <taxon>Euteleostomi</taxon>
        <taxon>Mammalia</taxon>
        <taxon>Eutheria</taxon>
        <taxon>Euarchontoglires</taxon>
        <taxon>Primates</taxon>
        <taxon>Haplorrhini</taxon>
        <taxon>Catarrhini</taxon>
        <taxon>Hominidae</taxon>
        <taxon>Homo</taxon>
    </lineage>
</organism>
<proteinExistence type="evidence at protein level"/>
<gene>
    <name evidence="3" type="primary">LZTS2</name>
    <name type="synonym">KIAA1813</name>
    <name evidence="3" type="synonym">LAPSER1</name>
</gene>
<name>LZTS2_HUMAN</name>
<keyword id="KW-0131">Cell cycle</keyword>
<keyword id="KW-0132">Cell division</keyword>
<keyword id="KW-0175">Coiled coil</keyword>
<keyword id="KW-0963">Cytoplasm</keyword>
<keyword id="KW-0206">Cytoskeleton</keyword>
<keyword id="KW-0493">Microtubule</keyword>
<keyword id="KW-0498">Mitosis</keyword>
<keyword id="KW-0597">Phosphoprotein</keyword>
<keyword id="KW-1267">Proteomics identification</keyword>
<keyword id="KW-1185">Reference proteome</keyword>
<keyword id="KW-0879">Wnt signaling pathway</keyword>
<protein>
    <recommendedName>
        <fullName evidence="3">Leucine zipper putative tumor suppressor 2</fullName>
        <shortName>hLZTS2</shortName>
    </recommendedName>
    <alternativeName>
        <fullName evidence="3">Protein LAPSER1</fullName>
    </alternativeName>
</protein>
<comment type="function">
    <text evidence="3 7 8 9 10">Negative regulator of katanin-mediated microtubule severing and release from the centrosome. Required for central spindle formation and the completion of cytokinesis. May negatively regulate axonal outgrowth by preventing the formation of microtubule bundles that are necessary for transport within the elongating axon. Negative regulator of the Wnt signaling pathway. Represses beta-catenin-mediated transcriptional activation by promoting the nuclear exclusion of beta-catenin.</text>
</comment>
<comment type="subunit">
    <text evidence="3 7 8">Interacts with KATNB1. Also interacts with CTNNB1, gamma-tubulin and KIF23.</text>
</comment>
<comment type="interaction">
    <interactant intactId="EBI-741037">
        <id>Q9BRK4</id>
    </interactant>
    <interactant intactId="EBI-11096309">
        <id>Q9NYB9-2</id>
        <label>ABI2</label>
    </interactant>
    <organismsDiffer>false</organismsDiffer>
    <experiments>3</experiments>
</comment>
<comment type="interaction">
    <interactant intactId="EBI-741037">
        <id>Q9BRK4</id>
    </interactant>
    <interactant intactId="EBI-2602396">
        <id>Q9ULW3</id>
        <label>ABT1</label>
    </interactant>
    <organismsDiffer>false</organismsDiffer>
    <experiments>3</experiments>
</comment>
<comment type="interaction">
    <interactant intactId="EBI-741037">
        <id>Q9BRK4</id>
    </interactant>
    <interactant intactId="EBI-8637627">
        <id>Q8WTP8</id>
        <label>AEN</label>
    </interactant>
    <organismsDiffer>false</organismsDiffer>
    <experiments>3</experiments>
</comment>
<comment type="interaction">
    <interactant intactId="EBI-741037">
        <id>Q9BRK4</id>
    </interactant>
    <interactant intactId="EBI-12119298">
        <id>Q8WTP8-2</id>
        <label>AEN</label>
    </interactant>
    <organismsDiffer>false</organismsDiffer>
    <experiments>3</experiments>
</comment>
<comment type="interaction">
    <interactant intactId="EBI-741037">
        <id>Q9BRK4</id>
    </interactant>
    <interactant intactId="EBI-8643161">
        <id>Q9NX04</id>
        <label>AIRIM</label>
    </interactant>
    <organismsDiffer>false</organismsDiffer>
    <experiments>6</experiments>
</comment>
<comment type="interaction">
    <interactant intactId="EBI-741037">
        <id>Q9BRK4</id>
    </interactant>
    <interactant intactId="EBI-744859">
        <id>Q96IX9</id>
        <label>ANKRD36BP1</label>
    </interactant>
    <organismsDiffer>false</organismsDiffer>
    <experiments>3</experiments>
</comment>
<comment type="interaction">
    <interactant intactId="EBI-741037">
        <id>Q9BRK4</id>
    </interactant>
    <interactant intactId="EBI-541426">
        <id>Q9BXS5</id>
        <label>AP1M1</label>
    </interactant>
    <organismsDiffer>false</organismsDiffer>
    <experiments>3</experiments>
</comment>
<comment type="interaction">
    <interactant intactId="EBI-741037">
        <id>Q9BRK4</id>
    </interactant>
    <interactant intactId="EBI-308663">
        <id>A7KAX9</id>
        <label>ARHGAP32</label>
    </interactant>
    <organismsDiffer>false</organismsDiffer>
    <experiments>3</experiments>
</comment>
<comment type="interaction">
    <interactant intactId="EBI-741037">
        <id>Q9BRK4</id>
    </interactant>
    <interactant intactId="EBI-742909">
        <id>Q9H6L4</id>
        <label>ARMC7</label>
    </interactant>
    <organismsDiffer>false</organismsDiffer>
    <experiments>3</experiments>
</comment>
<comment type="interaction">
    <interactant intactId="EBI-741037">
        <id>Q9BRK4</id>
    </interactant>
    <interactant intactId="EBI-745689">
        <id>Q7L5A3</id>
        <label>ATOSB</label>
    </interactant>
    <organismsDiffer>false</organismsDiffer>
    <experiments>3</experiments>
</comment>
<comment type="interaction">
    <interactant intactId="EBI-741037">
        <id>Q9BRK4</id>
    </interactant>
    <interactant intactId="EBI-1166928">
        <id>Q8N5M1</id>
        <label>ATPAF2</label>
    </interactant>
    <organismsDiffer>false</organismsDiffer>
    <experiments>6</experiments>
</comment>
<comment type="interaction">
    <interactant intactId="EBI-741037">
        <id>Q9BRK4</id>
    </interactant>
    <interactant intactId="EBI-742750">
        <id>Q8TBE0</id>
        <label>BAHD1</label>
    </interactant>
    <organismsDiffer>false</organismsDiffer>
    <experiments>7</experiments>
</comment>
<comment type="interaction">
    <interactant intactId="EBI-741037">
        <id>Q9BRK4</id>
    </interactant>
    <interactant intactId="EBI-745073">
        <id>Q9BXY8</id>
        <label>BEX2</label>
    </interactant>
    <organismsDiffer>false</organismsDiffer>
    <experiments>3</experiments>
</comment>
<comment type="interaction">
    <interactant intactId="EBI-741037">
        <id>Q9BRK4</id>
    </interactant>
    <interactant intactId="EBI-762076">
        <id>P21810</id>
        <label>BGN</label>
    </interactant>
    <organismsDiffer>false</organismsDiffer>
    <experiments>4</experiments>
</comment>
<comment type="interaction">
    <interactant intactId="EBI-741037">
        <id>Q9BRK4</id>
    </interactant>
    <interactant intactId="EBI-358049">
        <id>Q13895</id>
        <label>BYSL</label>
    </interactant>
    <organismsDiffer>false</organismsDiffer>
    <experiments>6</experiments>
</comment>
<comment type="interaction">
    <interactant intactId="EBI-741037">
        <id>Q9BRK4</id>
    </interactant>
    <interactant intactId="EBI-739879">
        <id>Q53TS8</id>
        <label>C2CD6</label>
    </interactant>
    <organismsDiffer>false</organismsDiffer>
    <experiments>3</experiments>
</comment>
<comment type="interaction">
    <interactant intactId="EBI-741037">
        <id>Q9BRK4</id>
    </interactant>
    <interactant intactId="EBI-715389">
        <id>Q9H7E9</id>
        <label>C8orf33</label>
    </interactant>
    <organismsDiffer>false</organismsDiffer>
    <experiments>3</experiments>
</comment>
<comment type="interaction">
    <interactant intactId="EBI-741037">
        <id>Q9BRK4</id>
    </interactant>
    <interactant intactId="EBI-10311131">
        <id>Q9NP86</id>
        <label>CABP5</label>
    </interactant>
    <organismsDiffer>false</organismsDiffer>
    <experiments>3</experiments>
</comment>
<comment type="interaction">
    <interactant intactId="EBI-741037">
        <id>Q9BRK4</id>
    </interactant>
    <interactant intactId="EBI-751319">
        <id>Q9H257</id>
        <label>CARD9</label>
    </interactant>
    <organismsDiffer>false</organismsDiffer>
    <experiments>3</experiments>
</comment>
<comment type="interaction">
    <interactant intactId="EBI-741037">
        <id>Q9BRK4</id>
    </interactant>
    <interactant intactId="EBI-744545">
        <id>Q8NEC5</id>
        <label>CATSPER1</label>
    </interactant>
    <organismsDiffer>false</organismsDiffer>
    <experiments>3</experiments>
</comment>
<comment type="interaction">
    <interactant intactId="EBI-741037">
        <id>Q9BRK4</id>
    </interactant>
    <interactant intactId="EBI-712912">
        <id>Q9HC52</id>
        <label>CBX8</label>
    </interactant>
    <organismsDiffer>false</organismsDiffer>
    <experiments>6</experiments>
</comment>
<comment type="interaction">
    <interactant intactId="EBI-741037">
        <id>Q9BRK4</id>
    </interactant>
    <interactant intactId="EBI-10238351">
        <id>Q9NVL8</id>
        <label>CCDC198</label>
    </interactant>
    <organismsDiffer>false</organismsDiffer>
    <experiments>3</experiments>
</comment>
<comment type="interaction">
    <interactant intactId="EBI-741037">
        <id>Q9BRK4</id>
    </interactant>
    <interactant intactId="EBI-395261">
        <id>P24863</id>
        <label>CCNC</label>
    </interactant>
    <organismsDiffer>false</organismsDiffer>
    <experiments>3</experiments>
</comment>
<comment type="interaction">
    <interactant intactId="EBI-741037">
        <id>Q9BRK4</id>
    </interactant>
    <interactant intactId="EBI-3905829">
        <id>P51959</id>
        <label>CCNG1</label>
    </interactant>
    <organismsDiffer>false</organismsDiffer>
    <experiments>3</experiments>
</comment>
<comment type="interaction">
    <interactant intactId="EBI-741037">
        <id>Q9BRK4</id>
    </interactant>
    <interactant intactId="EBI-739806">
        <id>O75909</id>
        <label>CCNK</label>
    </interactant>
    <organismsDiffer>false</organismsDiffer>
    <experiments>3</experiments>
</comment>
<comment type="interaction">
    <interactant intactId="EBI-741037">
        <id>Q9BRK4</id>
    </interactant>
    <interactant intactId="EBI-396137">
        <id>Q9UJX2</id>
        <label>CDC23</label>
    </interactant>
    <organismsDiffer>false</organismsDiffer>
    <experiments>3</experiments>
</comment>
<comment type="interaction">
    <interactant intactId="EBI-741037">
        <id>Q9BRK4</id>
    </interactant>
    <interactant intactId="EBI-746238">
        <id>Q07002</id>
        <label>CDK18</label>
    </interactant>
    <organismsDiffer>false</organismsDiffer>
    <experiments>3</experiments>
</comment>
<comment type="interaction">
    <interactant intactId="EBI-741037">
        <id>Q9BRK4</id>
    </interactant>
    <interactant intactId="EBI-3919850">
        <id>Q8IVW4</id>
        <label>CDKL3</label>
    </interactant>
    <organismsDiffer>false</organismsDiffer>
    <experiments>3</experiments>
</comment>
<comment type="interaction">
    <interactant intactId="EBI-741037">
        <id>Q9BRK4</id>
    </interactant>
    <interactant intactId="EBI-375077">
        <id>P38936</id>
        <label>CDKN1A</label>
    </interactant>
    <organismsDiffer>false</organismsDiffer>
    <experiments>3</experiments>
</comment>
<comment type="interaction">
    <interactant intactId="EBI-741037">
        <id>Q9BRK4</id>
    </interactant>
    <interactant intactId="EBI-1104570">
        <id>Q8IYX8</id>
        <label>CEP57L1</label>
    </interactant>
    <organismsDiffer>false</organismsDiffer>
    <experiments>3</experiments>
</comment>
<comment type="interaction">
    <interactant intactId="EBI-741037">
        <id>Q9BRK4</id>
    </interactant>
    <interactant intactId="EBI-10181988">
        <id>Q8IYX8-2</id>
        <label>CEP57L1</label>
    </interactant>
    <organismsDiffer>false</organismsDiffer>
    <experiments>3</experiments>
</comment>
<comment type="interaction">
    <interactant intactId="EBI-741037">
        <id>Q9BRK4</id>
    </interactant>
    <interactant intactId="EBI-749051">
        <id>Q8IYR0</id>
        <label>CFAP206</label>
    </interactant>
    <organismsDiffer>false</organismsDiffer>
    <experiments>3</experiments>
</comment>
<comment type="interaction">
    <interactant intactId="EBI-741037">
        <id>Q9BRK4</id>
    </interactant>
    <interactant intactId="EBI-743375">
        <id>Q9NX63</id>
        <label>CHCHD3</label>
    </interactant>
    <organismsDiffer>false</organismsDiffer>
    <experiments>3</experiments>
</comment>
<comment type="interaction">
    <interactant intactId="EBI-741037">
        <id>Q9BRK4</id>
    </interactant>
    <interactant intactId="EBI-741528">
        <id>Q9UKJ5</id>
        <label>CHIC2</label>
    </interactant>
    <organismsDiffer>false</organismsDiffer>
    <experiments>3</experiments>
</comment>
<comment type="interaction">
    <interactant intactId="EBI-741037">
        <id>Q9BRK4</id>
    </interactant>
    <interactant intactId="EBI-5655540">
        <id>Q8N3C7</id>
        <label>CLIP4</label>
    </interactant>
    <organismsDiffer>false</organismsDiffer>
    <experiments>3</experiments>
</comment>
<comment type="interaction">
    <interactant intactId="EBI-741037">
        <id>Q9BRK4</id>
    </interactant>
    <interactant intactId="EBI-741032">
        <id>Q8NE01</id>
        <label>CNNM3</label>
    </interactant>
    <organismsDiffer>false</organismsDiffer>
    <experiments>3</experiments>
</comment>
<comment type="interaction">
    <interactant intactId="EBI-741037">
        <id>Q9BRK4</id>
    </interactant>
    <interactant intactId="EBI-10269984">
        <id>Q8NE01-3</id>
        <label>CNNM3</label>
    </interactant>
    <organismsDiffer>false</organismsDiffer>
    <experiments>3</experiments>
</comment>
<comment type="interaction">
    <interactant intactId="EBI-741037">
        <id>Q9BRK4</id>
    </interactant>
    <interactant intactId="EBI-751621">
        <id>P48730</id>
        <label>CSNK1D</label>
    </interactant>
    <organismsDiffer>false</organismsDiffer>
    <experiments>3</experiments>
</comment>
<comment type="interaction">
    <interactant intactId="EBI-741037">
        <id>Q9BRK4</id>
    </interactant>
    <interactant intactId="EBI-5453285">
        <id>Q2TBE0</id>
        <label>CWF19L2</label>
    </interactant>
    <organismsDiffer>false</organismsDiffer>
    <experiments>3</experiments>
</comment>
<comment type="interaction">
    <interactant intactId="EBI-741037">
        <id>Q9BRK4</id>
    </interactant>
    <interactant intactId="EBI-740086">
        <id>Q96GG9</id>
        <label>DCUN1D1</label>
    </interactant>
    <organismsDiffer>false</organismsDiffer>
    <experiments>6</experiments>
</comment>
<comment type="interaction">
    <interactant intactId="EBI-741037">
        <id>Q9BRK4</id>
    </interactant>
    <interactant intactId="EBI-742953">
        <id>Q9BY27</id>
        <label>DGCR6L</label>
    </interactant>
    <organismsDiffer>false</organismsDiffer>
    <experiments>3</experiments>
</comment>
<comment type="interaction">
    <interactant intactId="EBI-741037">
        <id>Q9BRK4</id>
    </interactant>
    <interactant intactId="EBI-395638">
        <id>O14645</id>
        <label>DNALI1</label>
    </interactant>
    <organismsDiffer>false</organismsDiffer>
    <experiments>3</experiments>
</comment>
<comment type="interaction">
    <interactant intactId="EBI-741037">
        <id>Q9BRK4</id>
    </interactant>
    <interactant intactId="EBI-6591081">
        <id>Q13115</id>
        <label>DUSP4</label>
    </interactant>
    <organismsDiffer>false</organismsDiffer>
    <experiments>3</experiments>
</comment>
<comment type="interaction">
    <interactant intactId="EBI-741037">
        <id>Q9BRK4</id>
    </interactant>
    <interactant intactId="EBI-1053596">
        <id>Q13627</id>
        <label>DYRK1A</label>
    </interactant>
    <organismsDiffer>false</organismsDiffer>
    <experiments>6</experiments>
</comment>
<comment type="interaction">
    <interactant intactId="EBI-741037">
        <id>Q9BRK4</id>
    </interactant>
    <interactant intactId="EBI-634187">
        <id>Q9Y463</id>
        <label>DYRK1B</label>
    </interactant>
    <organismsDiffer>false</organismsDiffer>
    <experiments>5</experiments>
</comment>
<comment type="interaction">
    <interactant intactId="EBI-741037">
        <id>Q9BRK4</id>
    </interactant>
    <interactant intactId="EBI-749432">
        <id>Q92630</id>
        <label>DYRK2</label>
    </interactant>
    <organismsDiffer>false</organismsDiffer>
    <experiments>3</experiments>
</comment>
<comment type="interaction">
    <interactant intactId="EBI-741037">
        <id>Q9BRK4</id>
    </interactant>
    <interactant intactId="EBI-297353">
        <id>P00533</id>
        <label>EGFR</label>
    </interactant>
    <organismsDiffer>false</organismsDiffer>
    <experiments>2</experiments>
</comment>
<comment type="interaction">
    <interactant intactId="EBI-741037">
        <id>Q9BRK4</id>
    </interactant>
    <interactant intactId="EBI-2339219">
        <id>Q08426</id>
        <label>EHHADH</label>
    </interactant>
    <organismsDiffer>false</organismsDiffer>
    <experiments>3</experiments>
</comment>
<comment type="interaction">
    <interactant intactId="EBI-741037">
        <id>Q9BRK4</id>
    </interactant>
    <interactant intactId="EBI-353818">
        <id>O15371</id>
        <label>EIF3D</label>
    </interactant>
    <organismsDiffer>false</organismsDiffer>
    <experiments>3</experiments>
</comment>
<comment type="interaction">
    <interactant intactId="EBI-741037">
        <id>Q9BRK4</id>
    </interactant>
    <interactant intactId="EBI-398610">
        <id>O60573</id>
        <label>EIF4E2</label>
    </interactant>
    <organismsDiffer>false</organismsDiffer>
    <experiments>3</experiments>
</comment>
<comment type="interaction">
    <interactant intactId="EBI-741037">
        <id>Q9BRK4</id>
    </interactant>
    <interactant intactId="EBI-371876">
        <id>Q9NQT4</id>
        <label>EXOSC5</label>
    </interactant>
    <organismsDiffer>false</organismsDiffer>
    <experiments>3</experiments>
</comment>
<comment type="interaction">
    <interactant intactId="EBI-741037">
        <id>Q9BRK4</id>
    </interactant>
    <interactant intactId="EBI-10192902">
        <id>O95990-3</id>
        <label>FAM107A</label>
    </interactant>
    <organismsDiffer>false</organismsDiffer>
    <experiments>3</experiments>
</comment>
<comment type="interaction">
    <interactant intactId="EBI-741037">
        <id>Q9BRK4</id>
    </interactant>
    <interactant intactId="EBI-741626">
        <id>Q9H5Z6</id>
        <label>FAM124B</label>
    </interactant>
    <organismsDiffer>false</organismsDiffer>
    <experiments>3</experiments>
</comment>
<comment type="interaction">
    <interactant intactId="EBI-741037">
        <id>Q9BRK4</id>
    </interactant>
    <interactant intactId="EBI-719941">
        <id>Q3B820</id>
        <label>FAM161A</label>
    </interactant>
    <organismsDiffer>false</organismsDiffer>
    <experiments>6</experiments>
</comment>
<comment type="interaction">
    <interactant intactId="EBI-741037">
        <id>Q9BRK4</id>
    </interactant>
    <interactant intactId="EBI-12006844">
        <id>A6H8Z2</id>
        <label>FAM221B</label>
    </interactant>
    <organismsDiffer>false</organismsDiffer>
    <experiments>3</experiments>
</comment>
<comment type="interaction">
    <interactant intactId="EBI-741037">
        <id>Q9BRK4</id>
    </interactant>
    <interactant intactId="EBI-742802">
        <id>Q9Y247</id>
        <label>FAM50B</label>
    </interactant>
    <organismsDiffer>false</organismsDiffer>
    <experiments>3</experiments>
</comment>
<comment type="interaction">
    <interactant intactId="EBI-741037">
        <id>Q9BRK4</id>
    </interactant>
    <interactant intactId="EBI-6658203">
        <id>Q86YD7</id>
        <label>FAM90A1</label>
    </interactant>
    <organismsDiffer>false</organismsDiffer>
    <experiments>3</experiments>
</comment>
<comment type="interaction">
    <interactant intactId="EBI-741037">
        <id>Q9BRK4</id>
    </interactant>
    <interactant intactId="EBI-2339898">
        <id>Q9NW38</id>
        <label>FANCL</label>
    </interactant>
    <organismsDiffer>false</organismsDiffer>
    <experiments>3</experiments>
</comment>
<comment type="interaction">
    <interactant intactId="EBI-741037">
        <id>Q9BRK4</id>
    </interactant>
    <interactant intactId="EBI-10244131">
        <id>Q8TES7-6</id>
        <label>FBF1</label>
    </interactant>
    <organismsDiffer>false</organismsDiffer>
    <experiments>3</experiments>
</comment>
<comment type="interaction">
    <interactant intactId="EBI-741037">
        <id>Q9BRK4</id>
    </interactant>
    <interactant intactId="EBI-2515330">
        <id>Q96JP0</id>
        <label>FEM1C</label>
    </interactant>
    <organismsDiffer>false</organismsDiffer>
    <experiments>3</experiments>
</comment>
<comment type="interaction">
    <interactant intactId="EBI-741037">
        <id>Q9BRK4</id>
    </interactant>
    <interactant intactId="EBI-6657662">
        <id>P61328</id>
        <label>FGF12</label>
    </interactant>
    <organismsDiffer>false</organismsDiffer>
    <experiments>3</experiments>
</comment>
<comment type="interaction">
    <interactant intactId="EBI-741037">
        <id>Q9BRK4</id>
    </interactant>
    <interactant intactId="EBI-744771">
        <id>O75344</id>
        <label>FKBP6</label>
    </interactant>
    <organismsDiffer>false</organismsDiffer>
    <experiments>7</experiments>
</comment>
<comment type="interaction">
    <interactant intactId="EBI-741037">
        <id>Q9BRK4</id>
    </interactant>
    <interactant intactId="EBI-744935">
        <id>Q9BVV2</id>
        <label>FNDC11</label>
    </interactant>
    <organismsDiffer>false</organismsDiffer>
    <experiments>3</experiments>
</comment>
<comment type="interaction">
    <interactant intactId="EBI-741037">
        <id>Q9BRK4</id>
    </interactant>
    <interactant intactId="EBI-2515248">
        <id>Q14331</id>
        <label>FRG1</label>
    </interactant>
    <organismsDiffer>false</organismsDiffer>
    <experiments>3</experiments>
</comment>
<comment type="interaction">
    <interactant intactId="EBI-741037">
        <id>Q9BRK4</id>
    </interactant>
    <interactant intactId="EBI-741729">
        <id>Q96NE9</id>
        <label>FRMD6</label>
    </interactant>
    <organismsDiffer>false</organismsDiffer>
    <experiments>3</experiments>
</comment>
<comment type="interaction">
    <interactant intactId="EBI-741037">
        <id>Q9BRK4</id>
    </interactant>
    <interactant intactId="EBI-372506">
        <id>Q8TAE8</id>
        <label>GADD45GIP1</label>
    </interactant>
    <organismsDiffer>false</organismsDiffer>
    <experiments>3</experiments>
</comment>
<comment type="interaction">
    <interactant intactId="EBI-741037">
        <id>Q9BRK4</id>
    </interactant>
    <interactant intactId="EBI-9090198">
        <id>P15976-2</id>
        <label>GATA1</label>
    </interactant>
    <organismsDiffer>false</organismsDiffer>
    <experiments>3</experiments>
</comment>
<comment type="interaction">
    <interactant intactId="EBI-741037">
        <id>Q9BRK4</id>
    </interactant>
    <interactant intactId="EBI-746252">
        <id>Q96CN9</id>
        <label>GCC1</label>
    </interactant>
    <organismsDiffer>false</organismsDiffer>
    <experiments>3</experiments>
</comment>
<comment type="interaction">
    <interactant intactId="EBI-741037">
        <id>Q9BRK4</id>
    </interactant>
    <interactant intactId="EBI-744104">
        <id>P55040</id>
        <label>GEM</label>
    </interactant>
    <organismsDiffer>false</organismsDiffer>
    <experiments>6</experiments>
</comment>
<comment type="interaction">
    <interactant intactId="EBI-741037">
        <id>Q9BRK4</id>
    </interactant>
    <interactant intactId="EBI-712067">
        <id>Q8TF65</id>
        <label>GIPC2</label>
    </interactant>
    <organismsDiffer>false</organismsDiffer>
    <experiments>3</experiments>
</comment>
<comment type="interaction">
    <interactant intactId="EBI-741037">
        <id>Q9BRK4</id>
    </interactant>
    <interactant intactId="EBI-748515">
        <id>Q8IVS8</id>
        <label>GLYCTK</label>
    </interactant>
    <organismsDiffer>false</organismsDiffer>
    <experiments>3</experiments>
</comment>
<comment type="interaction">
    <interactant intactId="EBI-741037">
        <id>Q9BRK4</id>
    </interactant>
    <interactant intactId="EBI-745707">
        <id>Q8NEA9</id>
        <label>GMCL2</label>
    </interactant>
    <organismsDiffer>false</organismsDiffer>
    <experiments>3</experiments>
</comment>
<comment type="interaction">
    <interactant intactId="EBI-741037">
        <id>Q9BRK4</id>
    </interactant>
    <interactant intactId="EBI-746682">
        <id>Q9NVN8</id>
        <label>GNL3L</label>
    </interactant>
    <organismsDiffer>false</organismsDiffer>
    <experiments>3</experiments>
</comment>
<comment type="interaction">
    <interactant intactId="EBI-741037">
        <id>Q9BRK4</id>
    </interactant>
    <interactant intactId="EBI-751540">
        <id>O95872</id>
        <label>GPANK1</label>
    </interactant>
    <organismsDiffer>false</organismsDiffer>
    <experiments>4</experiments>
</comment>
<comment type="interaction">
    <interactant intactId="EBI-741037">
        <id>Q9BRK4</id>
    </interactant>
    <interactant intactId="EBI-5666657">
        <id>Q9NWQ4</id>
        <label>GPATCH2L</label>
    </interactant>
    <organismsDiffer>false</organismsDiffer>
    <experiments>3</experiments>
</comment>
<comment type="interaction">
    <interactant intactId="EBI-741037">
        <id>Q9BRK4</id>
    </interactant>
    <interactant intactId="EBI-401755">
        <id>P62993</id>
        <label>GRB2</label>
    </interactant>
    <organismsDiffer>false</organismsDiffer>
    <experiments>3</experiments>
</comment>
<comment type="interaction">
    <interactant intactId="EBI-741037">
        <id>Q9BRK4</id>
    </interactant>
    <interactant intactId="EBI-347472">
        <id>Q8TCT9</id>
        <label>HM13</label>
    </interactant>
    <organismsDiffer>false</organismsDiffer>
    <experiments>3</experiments>
</comment>
<comment type="interaction">
    <interactant intactId="EBI-741037">
        <id>Q9BRK4</id>
    </interactant>
    <interactant intactId="EBI-2126733">
        <id>Q9NSB8</id>
        <label>HOMER2</label>
    </interactant>
    <organismsDiffer>false</organismsDiffer>
    <experiments>3</experiments>
</comment>
<comment type="interaction">
    <interactant intactId="EBI-741037">
        <id>Q9BRK4</id>
    </interactant>
    <interactant intactId="EBI-745290">
        <id>P17482</id>
        <label>HOXB9</label>
    </interactant>
    <organismsDiffer>false</organismsDiffer>
    <experiments>4</experiments>
</comment>
<comment type="interaction">
    <interactant intactId="EBI-741037">
        <id>Q9BRK4</id>
    </interactant>
    <interactant intactId="EBI-352528">
        <id>P10809</id>
        <label>HSPD1</label>
    </interactant>
    <organismsDiffer>false</organismsDiffer>
    <experiments>7</experiments>
</comment>
<comment type="interaction">
    <interactant intactId="EBI-741037">
        <id>Q9BRK4</id>
    </interactant>
    <interactant intactId="EBI-6398041">
        <id>Q9UMF0</id>
        <label>ICAM5</label>
    </interactant>
    <organismsDiffer>false</organismsDiffer>
    <experiments>3</experiments>
</comment>
<comment type="interaction">
    <interactant intactId="EBI-741037">
        <id>Q9BRK4</id>
    </interactant>
    <interactant intactId="EBI-11955401">
        <id>Q86VF2-5</id>
        <label>IGFN1</label>
    </interactant>
    <organismsDiffer>false</organismsDiffer>
    <experiments>3</experiments>
</comment>
<comment type="interaction">
    <interactant intactId="EBI-741037">
        <id>Q9BRK4</id>
    </interactant>
    <interactant intactId="EBI-715611">
        <id>Q9C086</id>
        <label>INO80B</label>
    </interactant>
    <organismsDiffer>false</organismsDiffer>
    <experiments>3</experiments>
</comment>
<comment type="interaction">
    <interactant intactId="EBI-741037">
        <id>Q9BRK4</id>
    </interactant>
    <interactant intactId="EBI-745878">
        <id>Q9H0B3</id>
        <label>IQCN</label>
    </interactant>
    <organismsDiffer>false</organismsDiffer>
    <experiments>4</experiments>
</comment>
<comment type="interaction">
    <interactant intactId="EBI-741037">
        <id>Q9BRK4</id>
    </interactant>
    <interactant intactId="EBI-399080">
        <id>Q92993</id>
        <label>KAT5</label>
    </interactant>
    <organismsDiffer>false</organismsDiffer>
    <experiments>6</experiments>
</comment>
<comment type="interaction">
    <interactant intactId="EBI-741037">
        <id>Q9BRK4</id>
    </interactant>
    <interactant intactId="EBI-949239">
        <id>Q674X7</id>
        <label>KAZN</label>
    </interactant>
    <organismsDiffer>false</organismsDiffer>
    <experiments>3</experiments>
</comment>
<comment type="interaction">
    <interactant intactId="EBI-741037">
        <id>Q9BRK4</id>
    </interactant>
    <interactant intactId="EBI-2125614">
        <id>Q9BVG8</id>
        <label>KIFC3</label>
    </interactant>
    <organismsDiffer>false</organismsDiffer>
    <experiments>3</experiments>
</comment>
<comment type="interaction">
    <interactant intactId="EBI-741037">
        <id>Q9BRK4</id>
    </interactant>
    <interactant intactId="EBI-14069005">
        <id>Q9BVG8-5</id>
        <label>KIFC3</label>
    </interactant>
    <organismsDiffer>false</organismsDiffer>
    <experiments>3</experiments>
</comment>
<comment type="interaction">
    <interactant intactId="EBI-741037">
        <id>Q9BRK4</id>
    </interactant>
    <interactant intactId="EBI-948266">
        <id>O14901</id>
        <label>KLF11</label>
    </interactant>
    <organismsDiffer>false</organismsDiffer>
    <experiments>3</experiments>
</comment>
<comment type="interaction">
    <interactant intactId="EBI-741037">
        <id>Q9BRK4</id>
    </interactant>
    <interactant intactId="EBI-349938">
        <id>P52292</id>
        <label>KPNA2</label>
    </interactant>
    <organismsDiffer>false</organismsDiffer>
    <experiments>3</experiments>
</comment>
<comment type="interaction">
    <interactant intactId="EBI-741037">
        <id>Q9BRK4</id>
    </interactant>
    <interactant intactId="EBI-742828">
        <id>Q14847</id>
        <label>LASP1</label>
    </interactant>
    <organismsDiffer>false</organismsDiffer>
    <experiments>3</experiments>
</comment>
<comment type="interaction">
    <interactant intactId="EBI-741037">
        <id>Q9BRK4</id>
    </interactant>
    <interactant intactId="EBI-1348">
        <id>P06239</id>
        <label>LCK</label>
    </interactant>
    <organismsDiffer>false</organismsDiffer>
    <experiments>3</experiments>
</comment>
<comment type="interaction">
    <interactant intactId="EBI-741037">
        <id>Q9BRK4</id>
    </interactant>
    <interactant intactId="EBI-748884">
        <id>Q96GY3</id>
        <label>LIN37</label>
    </interactant>
    <organismsDiffer>false</organismsDiffer>
    <experiments>3</experiments>
</comment>
<comment type="interaction">
    <interactant intactId="EBI-741037">
        <id>Q9BRK4</id>
    </interactant>
    <interactant intactId="EBI-8639312">
        <id>P25800</id>
        <label>LMO1</label>
    </interactant>
    <organismsDiffer>false</organismsDiffer>
    <experiments>3</experiments>
</comment>
<comment type="interaction">
    <interactant intactId="EBI-741037">
        <id>Q9BRK4</id>
    </interactant>
    <interactant intactId="EBI-739696">
        <id>P25791</id>
        <label>LMO2</label>
    </interactant>
    <organismsDiffer>false</organismsDiffer>
    <experiments>3</experiments>
</comment>
<comment type="interaction">
    <interactant intactId="EBI-741037">
        <id>Q9BRK4</id>
    </interactant>
    <interactant intactId="EBI-11742507">
        <id>Q8TAP4-4</id>
        <label>LMO3</label>
    </interactant>
    <organismsDiffer>false</organismsDiffer>
    <experiments>3</experiments>
</comment>
<comment type="interaction">
    <interactant intactId="EBI-741037">
        <id>Q9BRK4</id>
    </interactant>
    <interactant intactId="EBI-10268010">
        <id>Q8N8X9</id>
        <label>MAB21L3</label>
    </interactant>
    <organismsDiffer>false</organismsDiffer>
    <experiments>6</experiments>
</comment>
<comment type="interaction">
    <interactant intactId="EBI-741037">
        <id>Q9BRK4</id>
    </interactant>
    <interactant intactId="EBI-751857">
        <id>O15481</id>
        <label>MAGEB4</label>
    </interactant>
    <organismsDiffer>false</organismsDiffer>
    <experiments>3</experiments>
</comment>
<comment type="interaction">
    <interactant intactId="EBI-741037">
        <id>Q9BRK4</id>
    </interactant>
    <interactant intactId="EBI-959949">
        <id>P28482</id>
        <label>MAPK1</label>
    </interactant>
    <organismsDiffer>false</organismsDiffer>
    <experiments>4</experiments>
</comment>
<comment type="interaction">
    <interactant intactId="EBI-741037">
        <id>Q9BRK4</id>
    </interactant>
    <interactant intactId="EBI-1104564">
        <id>Q9Y316</id>
        <label>MEMO1</label>
    </interactant>
    <organismsDiffer>false</organismsDiffer>
    <experiments>3</experiments>
</comment>
<comment type="interaction">
    <interactant intactId="EBI-741037">
        <id>Q9BRK4</id>
    </interactant>
    <interactant intactId="EBI-14086479">
        <id>Q8IVT4</id>
        <label>MGC50722</label>
    </interactant>
    <organismsDiffer>false</organismsDiffer>
    <experiments>3</experiments>
</comment>
<comment type="interaction">
    <interactant intactId="EBI-741037">
        <id>Q9BRK4</id>
    </interactant>
    <interactant intactId="EBI-10172526">
        <id>Q9UJV3-2</id>
        <label>MID2</label>
    </interactant>
    <organismsDiffer>false</organismsDiffer>
    <experiments>3</experiments>
</comment>
<comment type="interaction">
    <interactant intactId="EBI-741037">
        <id>Q9BRK4</id>
    </interactant>
    <interactant intactId="EBI-399246">
        <id>Q9UBU8</id>
        <label>MORF4L1</label>
    </interactant>
    <organismsDiffer>false</organismsDiffer>
    <experiments>3</experiments>
</comment>
<comment type="interaction">
    <interactant intactId="EBI-741037">
        <id>Q9BRK4</id>
    </interactant>
    <interactant intactId="EBI-10288852">
        <id>Q9UBU8-2</id>
        <label>MORF4L1</label>
    </interactant>
    <organismsDiffer>false</organismsDiffer>
    <experiments>3</experiments>
</comment>
<comment type="interaction">
    <interactant intactId="EBI-741037">
        <id>Q9BRK4</id>
    </interactant>
    <interactant intactId="EBI-399257">
        <id>Q15014</id>
        <label>MORF4L2</label>
    </interactant>
    <organismsDiffer>false</organismsDiffer>
    <experiments>3</experiments>
</comment>
<comment type="interaction">
    <interactant intactId="EBI-741037">
        <id>Q9BRK4</id>
    </interactant>
    <interactant intactId="EBI-9675802">
        <id>Q6PF18</id>
        <label>MORN3</label>
    </interactant>
    <organismsDiffer>false</organismsDiffer>
    <experiments>3</experiments>
</comment>
<comment type="interaction">
    <interactant intactId="EBI-741037">
        <id>Q9BRK4</id>
    </interactant>
    <interactant intactId="EBI-1757866">
        <id>P00540</id>
        <label>MOS</label>
    </interactant>
    <organismsDiffer>false</organismsDiffer>
    <experiments>3</experiments>
</comment>
<comment type="interaction">
    <interactant intactId="EBI-741037">
        <id>Q9BRK4</id>
    </interactant>
    <interactant intactId="EBI-714236">
        <id>Q13330</id>
        <label>MTA1</label>
    </interactant>
    <organismsDiffer>false</organismsDiffer>
    <experiments>3</experiments>
</comment>
<comment type="interaction">
    <interactant intactId="EBI-741037">
        <id>Q9BRK4</id>
    </interactant>
    <interactant intactId="EBI-744402">
        <id>Q9NP98</id>
        <label>MYOZ1</label>
    </interactant>
    <organismsDiffer>false</organismsDiffer>
    <experiments>3</experiments>
</comment>
<comment type="interaction">
    <interactant intactId="EBI-741037">
        <id>Q9BRK4</id>
    </interactant>
    <interactant intactId="EBI-464729">
        <id>P52298</id>
        <label>NCBP2</label>
    </interactant>
    <organismsDiffer>false</organismsDiffer>
    <experiments>3</experiments>
</comment>
<comment type="interaction">
    <interactant intactId="EBI-741037">
        <id>Q9BRK4</id>
    </interactant>
    <interactant intactId="EBI-713635">
        <id>O43639</id>
        <label>NCK2</label>
    </interactant>
    <organismsDiffer>false</organismsDiffer>
    <experiments>6</experiments>
</comment>
<comment type="interaction">
    <interactant intactId="EBI-741037">
        <id>Q9BRK4</id>
    </interactant>
    <interactant intactId="EBI-2880203">
        <id>O76041</id>
        <label>NEBL</label>
    </interactant>
    <organismsDiffer>false</organismsDiffer>
    <experiments>3</experiments>
</comment>
<comment type="interaction">
    <interactant intactId="EBI-741037">
        <id>Q9BRK4</id>
    </interactant>
    <interactant intactId="EBI-740364">
        <id>Q9HC98</id>
        <label>NEK6</label>
    </interactant>
    <organismsDiffer>false</organismsDiffer>
    <experiments>3</experiments>
</comment>
<comment type="interaction">
    <interactant intactId="EBI-741037">
        <id>Q9BRK4</id>
    </interactant>
    <interactant intactId="EBI-11750983">
        <id>Q9HC98-4</id>
        <label>NEK6</label>
    </interactant>
    <organismsDiffer>false</organismsDiffer>
    <experiments>3</experiments>
</comment>
<comment type="interaction">
    <interactant intactId="EBI-741037">
        <id>Q9BRK4</id>
    </interactant>
    <interactant intactId="EBI-749003">
        <id>Q9Y221</id>
        <label>NIP7</label>
    </interactant>
    <organismsDiffer>false</organismsDiffer>
    <experiments>3</experiments>
</comment>
<comment type="interaction">
    <interactant intactId="EBI-741037">
        <id>Q9BRK4</id>
    </interactant>
    <interactant intactId="EBI-741158">
        <id>Q96HA8</id>
        <label>NTAQ1</label>
    </interactant>
    <organismsDiffer>false</organismsDiffer>
    <experiments>3</experiments>
</comment>
<comment type="interaction">
    <interactant intactId="EBI-741037">
        <id>Q9BRK4</id>
    </interactant>
    <interactant intactId="EBI-746259">
        <id>Q96DC9</id>
        <label>OTUB2</label>
    </interactant>
    <organismsDiffer>false</organismsDiffer>
    <experiments>3</experiments>
</comment>
<comment type="interaction">
    <interactant intactId="EBI-741037">
        <id>Q9BRK4</id>
    </interactant>
    <interactant intactId="EBI-11022007">
        <id>Q9HBE1-4</id>
        <label>PATZ1</label>
    </interactant>
    <organismsDiffer>false</organismsDiffer>
    <experiments>3</experiments>
</comment>
<comment type="interaction">
    <interactant intactId="EBI-741037">
        <id>Q9BRK4</id>
    </interactant>
    <interactant intactId="EBI-530034">
        <id>O43189</id>
        <label>PHF1</label>
    </interactant>
    <organismsDiffer>false</organismsDiffer>
    <experiments>3</experiments>
</comment>
<comment type="interaction">
    <interactant intactId="EBI-741037">
        <id>Q9BRK4</id>
    </interactant>
    <interactant intactId="EBI-2339674">
        <id>Q5T6S3</id>
        <label>PHF19</label>
    </interactant>
    <organismsDiffer>false</organismsDiffer>
    <experiments>3</experiments>
</comment>
<comment type="interaction">
    <interactant intactId="EBI-741037">
        <id>Q9BRK4</id>
    </interactant>
    <interactant intactId="EBI-726447">
        <id>Q99569</id>
        <label>PKP4</label>
    </interactant>
    <organismsDiffer>false</organismsDiffer>
    <experiments>3</experiments>
</comment>
<comment type="interaction">
    <interactant intactId="EBI-741037">
        <id>Q9BRK4</id>
    </interactant>
    <interactant intactId="EBI-10241513">
        <id>Q494U1</id>
        <label>PLEKHN1</label>
    </interactant>
    <organismsDiffer>false</organismsDiffer>
    <experiments>3</experiments>
</comment>
<comment type="interaction">
    <interactant intactId="EBI-741037">
        <id>Q9BRK4</id>
    </interactant>
    <interactant intactId="EBI-10276663">
        <id>Q8WUT1</id>
        <label>POLDIP3</label>
    </interactant>
    <organismsDiffer>false</organismsDiffer>
    <experiments>6</experiments>
</comment>
<comment type="interaction">
    <interactant intactId="EBI-741037">
        <id>Q9BRK4</id>
    </interactant>
    <interactant intactId="EBI-1055079">
        <id>O15160</id>
        <label>POLR1C</label>
    </interactant>
    <organismsDiffer>false</organismsDiffer>
    <experiments>3</experiments>
</comment>
<comment type="interaction">
    <interactant intactId="EBI-741037">
        <id>Q9BRK4</id>
    </interactant>
    <interactant intactId="EBI-2557469">
        <id>Q6NYC8</id>
        <label>PPP1R18</label>
    </interactant>
    <organismsDiffer>false</organismsDiffer>
    <experiments>3</experiments>
</comment>
<comment type="interaction">
    <interactant intactId="EBI-741037">
        <id>Q9BRK4</id>
    </interactant>
    <interactant intactId="EBI-713867">
        <id>O60828</id>
        <label>PQBP1</label>
    </interactant>
    <organismsDiffer>false</organismsDiffer>
    <experiments>6</experiments>
</comment>
<comment type="interaction">
    <interactant intactId="EBI-741037">
        <id>Q9BRK4</id>
    </interactant>
    <interactant intactId="EBI-1383852">
        <id>P54646</id>
        <label>PRKAA2</label>
    </interactant>
    <organismsDiffer>false</organismsDiffer>
    <experiments>3</experiments>
</comment>
<comment type="interaction">
    <interactant intactId="EBI-741037">
        <id>Q9BRK4</id>
    </interactant>
    <interactant intactId="EBI-1053424">
        <id>O43741</id>
        <label>PRKAB2</label>
    </interactant>
    <organismsDiffer>false</organismsDiffer>
    <experiments>4</experiments>
</comment>
<comment type="interaction">
    <interactant intactId="EBI-741037">
        <id>Q9BRK4</id>
    </interactant>
    <interactant intactId="EBI-2798416">
        <id>Q99633</id>
        <label>PRPF18</label>
    </interactant>
    <organismsDiffer>false</organismsDiffer>
    <experiments>3</experiments>
</comment>
<comment type="interaction">
    <interactant intactId="EBI-741037">
        <id>Q9BRK4</id>
    </interactant>
    <interactant intactId="EBI-1567797">
        <id>Q8WWY3</id>
        <label>PRPF31</label>
    </interactant>
    <organismsDiffer>false</organismsDiffer>
    <experiments>3</experiments>
</comment>
<comment type="interaction">
    <interactant intactId="EBI-741037">
        <id>Q9BRK4</id>
    </interactant>
    <interactant intactId="EBI-11986293">
        <id>P0CG20</id>
        <label>PRR35</label>
    </interactant>
    <organismsDiffer>false</organismsDiffer>
    <experiments>3</experiments>
</comment>
<comment type="interaction">
    <interactant intactId="EBI-741037">
        <id>Q9BRK4</id>
    </interactant>
    <interactant intactId="EBI-359352">
        <id>P25786</id>
        <label>PSMA1</label>
    </interactant>
    <organismsDiffer>false</organismsDiffer>
    <experiments>3</experiments>
</comment>
<comment type="interaction">
    <interactant intactId="EBI-741037">
        <id>Q9BRK4</id>
    </interactant>
    <interactant intactId="EBI-347462">
        <id>P47897</id>
        <label>QARS1</label>
    </interactant>
    <organismsDiffer>false</organismsDiffer>
    <experiments>6</experiments>
</comment>
<comment type="interaction">
    <interactant intactId="EBI-741037">
        <id>Q9BRK4</id>
    </interactant>
    <interactant intactId="EBI-10209725">
        <id>P47897-2</id>
        <label>QARS1</label>
    </interactant>
    <organismsDiffer>false</organismsDiffer>
    <experiments>3</experiments>
</comment>
<comment type="interaction">
    <interactant intactId="EBI-741037">
        <id>Q9BRK4</id>
    </interactant>
    <interactant intactId="EBI-413628">
        <id>P63000</id>
        <label>RAC1</label>
    </interactant>
    <organismsDiffer>false</organismsDiffer>
    <experiments>3</experiments>
</comment>
<comment type="interaction">
    <interactant intactId="EBI-741037">
        <id>Q9BRK4</id>
    </interactant>
    <interactant intactId="EBI-1055693">
        <id>O75771</id>
        <label>RAD51D</label>
    </interactant>
    <organismsDiffer>false</organismsDiffer>
    <experiments>9</experiments>
</comment>
<comment type="interaction">
    <interactant intactId="EBI-741037">
        <id>Q9BRK4</id>
    </interactant>
    <interactant intactId="EBI-744023">
        <id>Q9BTL3</id>
        <label>RAMAC</label>
    </interactant>
    <organismsDiffer>false</organismsDiffer>
    <experiments>3</experiments>
</comment>
<comment type="interaction">
    <interactant intactId="EBI-741037">
        <id>Q9BRK4</id>
    </interactant>
    <interactant intactId="EBI-2514922">
        <id>Q96T37</id>
        <label>RBM15</label>
    </interactant>
    <organismsDiffer>false</organismsDiffer>
    <experiments>3</experiments>
</comment>
<comment type="interaction">
    <interactant intactId="EBI-741037">
        <id>Q9BRK4</id>
    </interactant>
    <interactant intactId="EBI-740773">
        <id>Q96IZ5</id>
        <label>RBM41</label>
    </interactant>
    <organismsDiffer>false</organismsDiffer>
    <experiments>3</experiments>
</comment>
<comment type="interaction">
    <interactant intactId="EBI-741037">
        <id>Q9BRK4</id>
    </interactant>
    <interactant intactId="EBI-743428">
        <id>Q9P2K3</id>
        <label>RCOR3</label>
    </interactant>
    <organismsDiffer>false</organismsDiffer>
    <experiments>3</experiments>
</comment>
<comment type="interaction">
    <interactant intactId="EBI-741037">
        <id>Q9BRK4</id>
    </interactant>
    <interactant intactId="EBI-9658624">
        <id>Q9BSD3</id>
        <label>RHNO1</label>
    </interactant>
    <organismsDiffer>false</organismsDiffer>
    <experiments>3</experiments>
</comment>
<comment type="interaction">
    <interactant intactId="EBI-741037">
        <id>Q9BRK4</id>
    </interactant>
    <interactant intactId="EBI-366017">
        <id>Q13671</id>
        <label>RIN1</label>
    </interactant>
    <organismsDiffer>false</organismsDiffer>
    <experiments>9</experiments>
</comment>
<comment type="interaction">
    <interactant intactId="EBI-741037">
        <id>Q9BRK4</id>
    </interactant>
    <interactant intactId="EBI-2130266">
        <id>Q9H4P4</id>
        <label>RNF41</label>
    </interactant>
    <organismsDiffer>false</organismsDiffer>
    <experiments>3</experiments>
</comment>
<comment type="interaction">
    <interactant intactId="EBI-741037">
        <id>Q9BRK4</id>
    </interactant>
    <interactant intactId="EBI-10217913">
        <id>Q14D33</id>
        <label>RTP5</label>
    </interactant>
    <organismsDiffer>false</organismsDiffer>
    <experiments>3</experiments>
</comment>
<comment type="interaction">
    <interactant intactId="EBI-741037">
        <id>Q9BRK4</id>
    </interactant>
    <interactant intactId="EBI-10224192">
        <id>Q06455-4</id>
        <label>RUNX1T1</label>
    </interactant>
    <organismsDiffer>false</organismsDiffer>
    <experiments>3</experiments>
</comment>
<comment type="interaction">
    <interactant intactId="EBI-741037">
        <id>Q9BRK4</id>
    </interactant>
    <interactant intactId="EBI-748391">
        <id>Q9BWG6</id>
        <label>SCNM1</label>
    </interactant>
    <organismsDiffer>false</organismsDiffer>
    <experiments>3</experiments>
</comment>
<comment type="interaction">
    <interactant intactId="EBI-741037">
        <id>Q9BRK4</id>
    </interactant>
    <interactant intactId="EBI-10251550">
        <id>Q6NXQ0</id>
        <label>SFRS2</label>
    </interactant>
    <organismsDiffer>false</organismsDiffer>
    <experiments>3</experiments>
</comment>
<comment type="interaction">
    <interactant intactId="EBI-741037">
        <id>Q9BRK4</id>
    </interactant>
    <interactant intactId="EBI-747035">
        <id>Q9H788</id>
        <label>SH2D4A</label>
    </interactant>
    <organismsDiffer>false</organismsDiffer>
    <experiments>3</experiments>
</comment>
<comment type="interaction">
    <interactant intactId="EBI-741037">
        <id>Q9BRK4</id>
    </interactant>
    <interactant intactId="EBI-346595">
        <id>Q96B97</id>
        <label>SH3KBP1</label>
    </interactant>
    <organismsDiffer>false</organismsDiffer>
    <experiments>3</experiments>
</comment>
<comment type="interaction">
    <interactant intactId="EBI-741037">
        <id>Q9BRK4</id>
    </interactant>
    <interactant intactId="EBI-10225873">
        <id>Q08AM8</id>
        <label>SH3RF2</label>
    </interactant>
    <organismsDiffer>false</organismsDiffer>
    <experiments>3</experiments>
</comment>
<comment type="interaction">
    <interactant intactId="EBI-741037">
        <id>Q9BRK4</id>
    </interactant>
    <interactant intactId="EBI-10313866">
        <id>Q9NUL5</id>
        <label>SHFL</label>
    </interactant>
    <organismsDiffer>false</organismsDiffer>
    <experiments>3</experiments>
</comment>
<comment type="interaction">
    <interactant intactId="EBI-741037">
        <id>Q9BRK4</id>
    </interactant>
    <interactant intactId="EBI-10223741">
        <id>Q05CH4</id>
        <label>SLC15A3</label>
    </interactant>
    <organismsDiffer>false</organismsDiffer>
    <experiments>3</experiments>
</comment>
<comment type="interaction">
    <interactant intactId="EBI-741037">
        <id>Q9BRK4</id>
    </interactant>
    <interactant intactId="EBI-356254">
        <id>P12236</id>
        <label>SLC25A6</label>
    </interactant>
    <organismsDiffer>false</organismsDiffer>
    <experiments>3</experiments>
</comment>
<comment type="interaction">
    <interactant intactId="EBI-741037">
        <id>Q9BRK4</id>
    </interactant>
    <interactant intactId="EBI-12176399">
        <id>Q15043-2</id>
        <label>SLC39A14</label>
    </interactant>
    <organismsDiffer>false</organismsDiffer>
    <experiments>3</experiments>
</comment>
<comment type="interaction">
    <interactant intactId="EBI-741037">
        <id>Q9BRK4</id>
    </interactant>
    <interactant intactId="EBI-750559">
        <id>O95391</id>
        <label>SLU7</label>
    </interactant>
    <organismsDiffer>false</organismsDiffer>
    <experiments>3</experiments>
</comment>
<comment type="interaction">
    <interactant intactId="EBI-741037">
        <id>Q9BRK4</id>
    </interactant>
    <interactant intactId="EBI-358489">
        <id>Q96GM5</id>
        <label>SMARCD1</label>
    </interactant>
    <organismsDiffer>false</organismsDiffer>
    <experiments>3</experiments>
</comment>
<comment type="interaction">
    <interactant intactId="EBI-741037">
        <id>Q9BRK4</id>
    </interactant>
    <interactant intactId="EBI-741850">
        <id>Q9BZL3</id>
        <label>SMIM3</label>
    </interactant>
    <organismsDiffer>false</organismsDiffer>
    <experiments>3</experiments>
</comment>
<comment type="interaction">
    <interactant intactId="EBI-741037">
        <id>Q9BRK4</id>
    </interactant>
    <interactant intactId="EBI-632715">
        <id>Q13573</id>
        <label>SNW1</label>
    </interactant>
    <organismsDiffer>false</organismsDiffer>
    <experiments>3</experiments>
</comment>
<comment type="interaction">
    <interactant intactId="EBI-741037">
        <id>Q9BRK4</id>
    </interactant>
    <interactant intactId="EBI-9380649">
        <id>Q8N9S9</id>
        <label>SNX31</label>
    </interactant>
    <organismsDiffer>false</organismsDiffer>
    <experiments>3</experiments>
</comment>
<comment type="interaction">
    <interactant intactId="EBI-741037">
        <id>Q9BRK4</id>
    </interactant>
    <interactant intactId="EBI-744066">
        <id>Q9UM82</id>
        <label>SPATA2</label>
    </interactant>
    <organismsDiffer>false</organismsDiffer>
    <experiments>3</experiments>
</comment>
<comment type="interaction">
    <interactant intactId="EBI-741037">
        <id>Q9BRK4</id>
    </interactant>
    <interactant intactId="EBI-3916986">
        <id>Q86W54</id>
        <label>SPATA24</label>
    </interactant>
    <organismsDiffer>false</organismsDiffer>
    <experiments>3</experiments>
</comment>
<comment type="interaction">
    <interactant intactId="EBI-741037">
        <id>Q9BRK4</id>
    </interactant>
    <interactant intactId="EBI-372911">
        <id>Q9H0A9</id>
        <label>SPATC1L</label>
    </interactant>
    <organismsDiffer>false</organismsDiffer>
    <experiments>3</experiments>
</comment>
<comment type="interaction">
    <interactant intactId="EBI-741037">
        <id>Q9BRK4</id>
    </interactant>
    <interactant intactId="EBI-717201">
        <id>Q9UQ90</id>
        <label>SPG7</label>
    </interactant>
    <organismsDiffer>false</organismsDiffer>
    <experiments>3</experiments>
</comment>
<comment type="interaction">
    <interactant intactId="EBI-741037">
        <id>Q9BRK4</id>
    </interactant>
    <interactant intactId="EBI-10276615">
        <id>Q8WUK8</id>
        <label>STAC</label>
    </interactant>
    <organismsDiffer>false</organismsDiffer>
    <experiments>3</experiments>
</comment>
<comment type="interaction">
    <interactant intactId="EBI-741037">
        <id>Q9BRK4</id>
    </interactant>
    <interactant intactId="EBI-2652799">
        <id>Q99469</id>
        <label>STAC</label>
    </interactant>
    <organismsDiffer>false</organismsDiffer>
    <experiments>3</experiments>
</comment>
<comment type="interaction">
    <interactant intactId="EBI-741037">
        <id>Q9BRK4</id>
    </interactant>
    <interactant intactId="EBI-2876787">
        <id>Q8IYB8</id>
        <label>SUPV3L1</label>
    </interactant>
    <organismsDiffer>false</organismsDiffer>
    <experiments>3</experiments>
</comment>
<comment type="interaction">
    <interactant intactId="EBI-741037">
        <id>Q9BRK4</id>
    </interactant>
    <interactant intactId="EBI-349968">
        <id>O43463</id>
        <label>SUV39H1</label>
    </interactant>
    <organismsDiffer>false</organismsDiffer>
    <experiments>6</experiments>
</comment>
<comment type="interaction">
    <interactant intactId="EBI-741037">
        <id>Q9BRK4</id>
    </interactant>
    <interactant intactId="EBI-745392">
        <id>Q9BSW7</id>
        <label>SYT17</label>
    </interactant>
    <organismsDiffer>false</organismsDiffer>
    <experiments>3</experiments>
</comment>
<comment type="interaction">
    <interactant intactId="EBI-741037">
        <id>Q9BRK4</id>
    </interactant>
    <interactant intactId="EBI-3258000">
        <id>Q9P0N9</id>
        <label>TBC1D7</label>
    </interactant>
    <organismsDiffer>false</organismsDiffer>
    <experiments>3</experiments>
</comment>
<comment type="interaction">
    <interactant intactId="EBI-741037">
        <id>Q9BRK4</id>
    </interactant>
    <interactant intactId="EBI-710310">
        <id>Q15560</id>
        <label>TCEA2</label>
    </interactant>
    <organismsDiffer>false</organismsDiffer>
    <experiments>3</experiments>
</comment>
<comment type="interaction">
    <interactant intactId="EBI-741037">
        <id>Q9BRK4</id>
    </interactant>
    <interactant intactId="EBI-740781">
        <id>Q9BT92</id>
        <label>TCHP</label>
    </interactant>
    <organismsDiffer>false</organismsDiffer>
    <experiments>3</experiments>
</comment>
<comment type="interaction">
    <interactant intactId="EBI-741037">
        <id>Q9BRK4</id>
    </interactant>
    <interactant intactId="EBI-10176734">
        <id>D3DUQ6</id>
        <label>TEAD4</label>
    </interactant>
    <organismsDiffer>false</organismsDiffer>
    <experiments>3</experiments>
</comment>
<comment type="interaction">
    <interactant intactId="EBI-741037">
        <id>Q9BRK4</id>
    </interactant>
    <interactant intactId="EBI-747736">
        <id>Q15561</id>
        <label>TEAD4</label>
    </interactant>
    <organismsDiffer>false</organismsDiffer>
    <experiments>3</experiments>
</comment>
<comment type="interaction">
    <interactant intactId="EBI-741037">
        <id>Q9BRK4</id>
    </interactant>
    <interactant intactId="EBI-745404">
        <id>Q9P2Z0</id>
        <label>THAP10</label>
    </interactant>
    <organismsDiffer>false</organismsDiffer>
    <experiments>3</experiments>
</comment>
<comment type="interaction">
    <interactant intactId="EBI-741037">
        <id>Q9BRK4</id>
    </interactant>
    <interactant intactId="EBI-741350">
        <id>Q9BT49</id>
        <label>THAP7</label>
    </interactant>
    <organismsDiffer>false</organismsDiffer>
    <experiments>6</experiments>
</comment>
<comment type="interaction">
    <interactant intactId="EBI-741037">
        <id>Q9BRK4</id>
    </interactant>
    <interactant intactId="EBI-11741437">
        <id>Q08117-2</id>
        <label>TLE5</label>
    </interactant>
    <organismsDiffer>false</organismsDiffer>
    <experiments>3</experiments>
</comment>
<comment type="interaction">
    <interactant intactId="EBI-741037">
        <id>Q9BRK4</id>
    </interactant>
    <interactant intactId="EBI-2509913">
        <id>Q96KP6</id>
        <label>TNIP3</label>
    </interactant>
    <organismsDiffer>false</organismsDiffer>
    <experiments>6</experiments>
</comment>
<comment type="interaction">
    <interactant intactId="EBI-741037">
        <id>Q9BRK4</id>
    </interactant>
    <interactant intactId="EBI-702370">
        <id>Q14134</id>
        <label>TRIM29</label>
    </interactant>
    <organismsDiffer>false</organismsDiffer>
    <experiments>4</experiments>
</comment>
<comment type="interaction">
    <interactant intactId="EBI-741037">
        <id>Q9BRK4</id>
    </interactant>
    <interactant intactId="EBI-5235829">
        <id>Q8IWZ5</id>
        <label>TRIM42</label>
    </interactant>
    <organismsDiffer>false</organismsDiffer>
    <experiments>3</experiments>
</comment>
<comment type="interaction">
    <interactant intactId="EBI-741037">
        <id>Q9BRK4</id>
    </interactant>
    <interactant intactId="EBI-21353855">
        <id>Q99598</id>
        <label>TSNAX</label>
    </interactant>
    <organismsDiffer>false</organismsDiffer>
    <experiments>3</experiments>
</comment>
<comment type="interaction">
    <interactant intactId="EBI-741037">
        <id>Q9BRK4</id>
    </interactant>
    <interactant intactId="EBI-852089">
        <id>Q96PF2</id>
        <label>TSSK2</label>
    </interactant>
    <organismsDiffer>false</organismsDiffer>
    <experiments>3</experiments>
</comment>
<comment type="interaction">
    <interactant intactId="EBI-741037">
        <id>Q9BRK4</id>
    </interactant>
    <interactant intactId="EBI-3918381">
        <id>Q96PN8</id>
        <label>TSSK3</label>
    </interactant>
    <organismsDiffer>false</organismsDiffer>
    <experiments>3</experiments>
</comment>
<comment type="interaction">
    <interactant intactId="EBI-741037">
        <id>Q9BRK4</id>
    </interactant>
    <interactant intactId="EBI-6447954">
        <id>Q5W5X9</id>
        <label>TTC23</label>
    </interactant>
    <organismsDiffer>false</organismsDiffer>
    <experiments>3</experiments>
</comment>
<comment type="interaction">
    <interactant intactId="EBI-741037">
        <id>Q9BRK4</id>
    </interactant>
    <interactant intactId="EBI-9090990">
        <id>Q5W5X9-3</id>
        <label>TTC23</label>
    </interactant>
    <organismsDiffer>false</organismsDiffer>
    <experiments>3</experiments>
</comment>
<comment type="interaction">
    <interactant intactId="EBI-741037">
        <id>Q9BRK4</id>
    </interactant>
    <interactant intactId="EBI-11979997">
        <id>Q6ZVT0-3</id>
        <label>TTLL10</label>
    </interactant>
    <organismsDiffer>false</organismsDiffer>
    <experiments>3</experiments>
</comment>
<comment type="interaction">
    <interactant intactId="EBI-741037">
        <id>Q9BRK4</id>
    </interactant>
    <interactant intactId="EBI-746539">
        <id>P83876</id>
        <label>TXNL4A</label>
    </interactant>
    <organismsDiffer>false</organismsDiffer>
    <experiments>3</experiments>
</comment>
<comment type="interaction">
    <interactant intactId="EBI-741037">
        <id>Q9BRK4</id>
    </interactant>
    <interactant intactId="EBI-7353612">
        <id>P57075-2</id>
        <label>UBASH3A</label>
    </interactant>
    <organismsDiffer>false</organismsDiffer>
    <experiments>3</experiments>
</comment>
<comment type="interaction">
    <interactant intactId="EBI-741037">
        <id>Q9BRK4</id>
    </interactant>
    <interactant intactId="EBI-1380492">
        <id>Q8TF42</id>
        <label>UBASH3B</label>
    </interactant>
    <organismsDiffer>false</organismsDiffer>
    <experiments>3</experiments>
</comment>
<comment type="interaction">
    <interactant intactId="EBI-741037">
        <id>Q9BRK4</id>
    </interactant>
    <interactant intactId="EBI-1055994">
        <id>Q15853</id>
        <label>USF2</label>
    </interactant>
    <organismsDiffer>false</organismsDiffer>
    <experiments>3</experiments>
</comment>
<comment type="interaction">
    <interactant intactId="EBI-741037">
        <id>Q9BRK4</id>
    </interactant>
    <interactant intactId="EBI-743272">
        <id>O75604</id>
        <label>USP2</label>
    </interactant>
    <organismsDiffer>false</organismsDiffer>
    <experiments>6</experiments>
</comment>
<comment type="interaction">
    <interactant intactId="EBI-741037">
        <id>Q9BRK4</id>
    </interactant>
    <interactant intactId="EBI-10225961">
        <id>Q08E77</id>
        <label>UTP14C</label>
    </interactant>
    <organismsDiffer>false</organismsDiffer>
    <experiments>4</experiments>
</comment>
<comment type="interaction">
    <interactant intactId="EBI-741037">
        <id>Q9BRK4</id>
    </interactant>
    <interactant intactId="EBI-11980193">
        <id>Q14119</id>
        <label>VEZF1</label>
    </interactant>
    <organismsDiffer>false</organismsDiffer>
    <experiments>3</experiments>
</comment>
<comment type="interaction">
    <interactant intactId="EBI-741037">
        <id>Q9BRK4</id>
    </interactant>
    <interactant intactId="EBI-10223946">
        <id>Q06250</id>
        <label>WT1-AS</label>
    </interactant>
    <organismsDiffer>false</organismsDiffer>
    <experiments>3</experiments>
</comment>
<comment type="interaction">
    <interactant intactId="EBI-741037">
        <id>Q9BRK4</id>
    </interactant>
    <interactant intactId="EBI-739899">
        <id>P24278</id>
        <label>ZBTB25</label>
    </interactant>
    <organismsDiffer>false</organismsDiffer>
    <experiments>3</experiments>
</comment>
<comment type="interaction">
    <interactant intactId="EBI-741037">
        <id>Q9BRK4</id>
    </interactant>
    <interactant intactId="EBI-14104088">
        <id>Q53FD0-2</id>
        <label>ZC2HC1C</label>
    </interactant>
    <organismsDiffer>false</organismsDiffer>
    <experiments>3</experiments>
</comment>
<comment type="interaction">
    <interactant intactId="EBI-741037">
        <id>Q9BRK4</id>
    </interactant>
    <interactant intactId="EBI-16428984">
        <id>A0A0S2Z6H0</id>
        <label>ZGPAT</label>
    </interactant>
    <organismsDiffer>false</organismsDiffer>
    <experiments>4</experiments>
</comment>
<comment type="interaction">
    <interactant intactId="EBI-741037">
        <id>Q9BRK4</id>
    </interactant>
    <interactant intactId="EBI-3439227">
        <id>Q8N5A5</id>
        <label>ZGPAT</label>
    </interactant>
    <organismsDiffer>false</organismsDiffer>
    <experiments>3</experiments>
</comment>
<comment type="interaction">
    <interactant intactId="EBI-741037">
        <id>Q9BRK4</id>
    </interactant>
    <interactant intactId="EBI-10183064">
        <id>Q8N5A5-2</id>
        <label>ZGPAT</label>
    </interactant>
    <organismsDiffer>false</organismsDiffer>
    <experiments>9</experiments>
</comment>
<comment type="interaction">
    <interactant intactId="EBI-741037">
        <id>Q9BRK4</id>
    </interactant>
    <interactant intactId="EBI-1965777">
        <id>Q9BRR0</id>
        <label>ZKSCAN3</label>
    </interactant>
    <organismsDiffer>false</organismsDiffer>
    <experiments>3</experiments>
</comment>
<comment type="interaction">
    <interactant intactId="EBI-741037">
        <id>Q9BRK4</id>
    </interactant>
    <interactant intactId="EBI-2682299">
        <id>Q96NC0</id>
        <label>ZMAT2</label>
    </interactant>
    <organismsDiffer>false</organismsDiffer>
    <experiments>3</experiments>
</comment>
<comment type="interaction">
    <interactant intactId="EBI-741037">
        <id>Q9BRK4</id>
    </interactant>
    <interactant intactId="EBI-746595">
        <id>Q96E35</id>
        <label>ZMYND19</label>
    </interactant>
    <organismsDiffer>false</organismsDiffer>
    <experiments>4</experiments>
</comment>
<comment type="interaction">
    <interactant intactId="EBI-741037">
        <id>Q9BRK4</id>
    </interactant>
    <interactant intactId="EBI-2555767">
        <id>Q15973</id>
        <label>ZNF124</label>
    </interactant>
    <organismsDiffer>false</organismsDiffer>
    <experiments>3</experiments>
</comment>
<comment type="interaction">
    <interactant intactId="EBI-741037">
        <id>Q9BRK4</id>
    </interactant>
    <interactant intactId="EBI-717634">
        <id>P17024</id>
        <label>ZNF20</label>
    </interactant>
    <organismsDiffer>false</organismsDiffer>
    <experiments>3</experiments>
</comment>
<comment type="interaction">
    <interactant intactId="EBI-741037">
        <id>Q9BRK4</id>
    </interactant>
    <interactant intactId="EBI-10177272">
        <id>P15622-3</id>
        <label>ZNF250</label>
    </interactant>
    <organismsDiffer>false</organismsDiffer>
    <experiments>3</experiments>
</comment>
<comment type="interaction">
    <interactant intactId="EBI-741037">
        <id>Q9BRK4</id>
    </interactant>
    <interactant intactId="EBI-347633">
        <id>Q9H9D4</id>
        <label>ZNF408</label>
    </interactant>
    <organismsDiffer>false</organismsDiffer>
    <experiments>5</experiments>
</comment>
<comment type="interaction">
    <interactant intactId="EBI-741037">
        <id>Q9BRK4</id>
    </interactant>
    <interactant intactId="EBI-740727">
        <id>Q8TAU3</id>
        <label>ZNF417</label>
    </interactant>
    <organismsDiffer>false</organismsDiffer>
    <experiments>6</experiments>
</comment>
<comment type="interaction">
    <interactant intactId="EBI-741037">
        <id>Q9BRK4</id>
    </interactant>
    <interactant intactId="EBI-743265">
        <id>Q9BUY5</id>
        <label>ZNF426</label>
    </interactant>
    <organismsDiffer>false</organismsDiffer>
    <experiments>3</experiments>
</comment>
<comment type="interaction">
    <interactant intactId="EBI-741037">
        <id>Q9BRK4</id>
    </interactant>
    <interactant intactId="EBI-740232">
        <id>Q9NWS9-2</id>
        <label>ZNF446</label>
    </interactant>
    <organismsDiffer>false</organismsDiffer>
    <experiments>3</experiments>
</comment>
<comment type="interaction">
    <interactant intactId="EBI-741037">
        <id>Q9BRK4</id>
    </interactant>
    <interactant intactId="EBI-1105370">
        <id>Q9ULM2</id>
        <label>ZNF490</label>
    </interactant>
    <organismsDiffer>false</organismsDiffer>
    <experiments>3</experiments>
</comment>
<comment type="interaction">
    <interactant intactId="EBI-741037">
        <id>Q9BRK4</id>
    </interactant>
    <interactant intactId="EBI-10172590">
        <id>Q7Z3I7</id>
        <label>ZNF572</label>
    </interactant>
    <organismsDiffer>false</organismsDiffer>
    <experiments>6</experiments>
</comment>
<comment type="interaction">
    <interactant intactId="EBI-741037">
        <id>Q9BRK4</id>
    </interactant>
    <interactant intactId="EBI-745520">
        <id>Q9P0T4</id>
        <label>ZNF581</label>
    </interactant>
    <organismsDiffer>false</organismsDiffer>
    <experiments>4</experiments>
</comment>
<comment type="interaction">
    <interactant intactId="EBI-741037">
        <id>Q9BRK4</id>
    </interactant>
    <interactant intactId="EBI-11985915">
        <id>Q5T619</id>
        <label>ZNF648</label>
    </interactant>
    <organismsDiffer>false</organismsDiffer>
    <experiments>3</experiments>
</comment>
<comment type="interaction">
    <interactant intactId="EBI-741037">
        <id>Q9BRK4</id>
    </interactant>
    <interactant intactId="EBI-10174671">
        <id>A8K932</id>
    </interactant>
    <organismsDiffer>false</organismsDiffer>
    <experiments>3</experiments>
</comment>
<comment type="interaction">
    <interactant intactId="EBI-741037">
        <id>Q9BRK4</id>
    </interactant>
    <interactant intactId="EBI-10236795">
        <id>Q95HA4</id>
    </interactant>
    <organismsDiffer>false</organismsDiffer>
    <experiments>3</experiments>
</comment>
<comment type="interaction">
    <interactant intactId="EBI-741037">
        <id>Q9BRK4</id>
    </interactant>
    <interactant intactId="EBI-10307481">
        <id>Q9H6F0</id>
    </interactant>
    <organismsDiffer>false</organismsDiffer>
    <experiments>3</experiments>
</comment>
<comment type="interaction">
    <interactant intactId="EBI-741037">
        <id>Q9BRK4</id>
    </interactant>
    <interactant intactId="EBI-9676218">
        <id>P03410</id>
        <label>tax</label>
    </interactant>
    <organismsDiffer>true</organismsDiffer>
    <experiments>5</experiments>
</comment>
<comment type="interaction">
    <interactant intactId="EBI-741037">
        <id>Q9BRK4</id>
    </interactant>
    <interactant intactId="EBI-9675596">
        <id>P0C206</id>
    </interactant>
    <organismsDiffer>true</organismsDiffer>
    <experiments>4</experiments>
</comment>
<comment type="subcellular location">
    <subcellularLocation>
        <location>Cytoplasm</location>
    </subcellularLocation>
    <subcellularLocation>
        <location>Cytoplasm</location>
        <location>Cytoskeleton</location>
        <location>Microtubule organizing center</location>
        <location>Centrosome</location>
    </subcellularLocation>
    <text>Localized to the centrosome throughout the cell cycle. Localized to the midbody in cells undergoing cytokinesis.</text>
</comment>
<comment type="tissue specificity">
    <text evidence="5">Highly expressed in prostate and testis, and at slightly lower levels in spleen, thymus, uterus, small intestine and colon.</text>
</comment>
<comment type="induction">
    <text evidence="9">By inhibition of NF-kappa-B signaling.</text>
</comment>
<comment type="similarity">
    <text evidence="3">Belongs to the LZTS2 family.</text>
</comment>
<comment type="sequence caution" evidence="11">
    <conflict type="erroneous initiation">
        <sequence resource="EMBL-CDS" id="BAB47442"/>
    </conflict>
</comment>
<accession>Q9BRK4</accession>
<accession>B1AL14</accession>
<accession>D3DR72</accession>
<accession>Q8N3I0</accession>
<accession>Q96J79</accession>
<accession>Q96JL2</accession>
<sequence>MAIVQTLPVPLEPAPEAATAPQAPVMGSVSSLISGRPCPGGPAPPRHHGPPGPTFFRQQDGLLRGGYEAQEPLCPAVPPRKAVPVTSFTYINEDFRTESPPSPSSDVEDAREQRAHNAHLRGPPPKLIPVSGKLEKNMEKILIRPTAFKPVLPKPRGAPSLPSFMGPRATGLSGSQGSLTQLFGGPASSSSSSSSSSAADKPLAFSGWASGCPSGTLSDSGRNSLSSLPTYSTGGAEPTTSSPGGHLPSHGSGRGALPGPARGVPTGPSHSDSGRSSSSKSTGSLGGRVAGGLLGSGTRASPDSSSCGERSPPPPPPPPSDEALLHCVLEGKLRDREAELQQLRDSLDENEATMCQAYEERQRHWQREREALREDCAAQAQRAQRAQQLLQLQVFQLQQEKRQLQDDFAQLLQEREQLERRCATLEREQRELGPRLEETKWEVCQKSGEISLLKQQLKESQAELVQKGSELVALRVALREARATLRVSEGRARGLQEAARARELELEACSQELQRHRQEAEQLREKAGQLDAEAAGLREPPVPPATADPFLLAESDEAKVQRAAAGVGGSLRAQVERLRVELQRERRRGEEQRDSFEGERLAWQAEKEQVIRYQKQLQHNYIQMYRRNRQLEQELQQLSLELEARELADLGLAEQAPCICLEEITATEI</sequence>